<proteinExistence type="evidence at protein level"/>
<accession>P36639</accession>
<accession>A4D205</accession>
<accession>Q6LES7</accession>
<accession>Q6P0Y6</accession>
<accession>Q7Z7N6</accession>
<accession>Q8IV95</accession>
<accession>Q9UBM0</accession>
<accession>Q9UBM9</accession>
<keyword id="KW-0002">3D-structure</keyword>
<keyword id="KW-0024">Alternative initiation</keyword>
<keyword id="KW-0963">Cytoplasm</keyword>
<keyword id="KW-0903">Direct protein sequencing</keyword>
<keyword id="KW-0378">Hydrolase</keyword>
<keyword id="KW-0460">Magnesium</keyword>
<keyword id="KW-0479">Metal-binding</keyword>
<keyword id="KW-0496">Mitochondrion</keyword>
<keyword id="KW-0539">Nucleus</keyword>
<keyword id="KW-1267">Proteomics identification</keyword>
<keyword id="KW-1185">Reference proteome</keyword>
<keyword id="KW-0694">RNA-binding</keyword>
<keyword id="KW-0809">Transit peptide</keyword>
<name>8ODP_HUMAN</name>
<comment type="function">
    <text evidence="4 6 7 8 9 13 16 17 18 19 20 21 22 23 24 25 27">Oxidized purine nucleoside triphosphate hydrolase which is a prominent sanitizer of the oxidized nucleotide pool (PubMed:10608900, PubMed:12857738, PubMed:22556419, PubMed:24695224, PubMed:24695225, PubMed:26238318, PubMed:28679043, PubMed:7713500, PubMed:8226881). Catalyzes the hydrolysis of 2-oxo-dATP (2-hydroxy-dATP) into 2-oxo-dAMP (PubMed:10373420). Also has a significant hydrolase activity toward 2-oxo-ATP, 8-oxo-dGTP and 8-oxo-dATP (PubMed:10373420, PubMed:11139615). Through the hydrolysis of oxidized purine nucleoside triphosphates, prevents their incorporation into DNA and the subsequent transversions A:T to C:G and G:C to T:A (PubMed:10373420, PubMed:10608900, PubMed:11756418, PubMed:12857738, PubMed:16607562, PubMed:24695224, PubMed:24695225, PubMed:26999531, PubMed:28035004, PubMed:8226881). Also catalyzes the hydrolysis of methylated purine nucleoside triphosphate preventing their integration into DNA (PubMed:30304478, PubMed:32144205). Through this antimutagenic activity protects cells from oxidative stress (PubMed:10608900, PubMed:12857738, PubMed:24695224, PubMed:24695225, PubMed:30304478, PubMed:32144205, PubMed:7713500, PubMed:8226881).</text>
</comment>
<comment type="catalytic activity">
    <reaction evidence="4 6 7 8 9 13 15 16 17 18 20 21 23 26 27">
        <text>2-oxo-dATP + H2O = 2-oxo-dAMP + diphosphate + H(+)</text>
        <dbReference type="Rhea" id="RHEA:31583"/>
        <dbReference type="ChEBI" id="CHEBI:15377"/>
        <dbReference type="ChEBI" id="CHEBI:15378"/>
        <dbReference type="ChEBI" id="CHEBI:33019"/>
        <dbReference type="ChEBI" id="CHEBI:63212"/>
        <dbReference type="ChEBI" id="CHEBI:77897"/>
        <dbReference type="EC" id="3.6.1.56"/>
    </reaction>
    <physiologicalReaction direction="left-to-right" evidence="31">
        <dbReference type="Rhea" id="RHEA:31584"/>
    </physiologicalReaction>
</comment>
<comment type="catalytic activity">
    <reaction evidence="7">
        <text>2-oxo-ATP + H2O = 2-oxo-AMP + diphosphate + H(+)</text>
        <dbReference type="Rhea" id="RHEA:67392"/>
        <dbReference type="ChEBI" id="CHEBI:15377"/>
        <dbReference type="ChEBI" id="CHEBI:15378"/>
        <dbReference type="ChEBI" id="CHEBI:33019"/>
        <dbReference type="ChEBI" id="CHEBI:71395"/>
        <dbReference type="ChEBI" id="CHEBI:172878"/>
    </reaction>
    <physiologicalReaction direction="left-to-right" evidence="32">
        <dbReference type="Rhea" id="RHEA:67393"/>
    </physiologicalReaction>
</comment>
<comment type="catalytic activity">
    <reaction evidence="4 6 7 8 9 13 15 16 17 18 20 21 23 26 27">
        <text>8-oxo-dGTP + H2O = 8-oxo-dGMP + diphosphate + H(+)</text>
        <dbReference type="Rhea" id="RHEA:31575"/>
        <dbReference type="ChEBI" id="CHEBI:15377"/>
        <dbReference type="ChEBI" id="CHEBI:15378"/>
        <dbReference type="ChEBI" id="CHEBI:33019"/>
        <dbReference type="ChEBI" id="CHEBI:63224"/>
        <dbReference type="ChEBI" id="CHEBI:77896"/>
    </reaction>
    <physiologicalReaction direction="left-to-right" evidence="31">
        <dbReference type="Rhea" id="RHEA:31576"/>
    </physiologicalReaction>
</comment>
<comment type="catalytic activity">
    <reaction evidence="7">
        <text>8-oxo-dATP + H2O = 8-oxo-dAMP + diphosphate + H(+)</text>
        <dbReference type="Rhea" id="RHEA:65396"/>
        <dbReference type="ChEBI" id="CHEBI:15377"/>
        <dbReference type="ChEBI" id="CHEBI:15378"/>
        <dbReference type="ChEBI" id="CHEBI:33019"/>
        <dbReference type="ChEBI" id="CHEBI:71361"/>
        <dbReference type="ChEBI" id="CHEBI:172871"/>
    </reaction>
    <physiologicalReaction direction="left-to-right" evidence="32">
        <dbReference type="Rhea" id="RHEA:65397"/>
    </physiologicalReaction>
</comment>
<comment type="catalytic activity">
    <reaction evidence="23">
        <text>O(6)-methyl-dGTP + H2O = O(6)-methyl-dGMP + diphosphate + H(+)</text>
        <dbReference type="Rhea" id="RHEA:67600"/>
        <dbReference type="ChEBI" id="CHEBI:15377"/>
        <dbReference type="ChEBI" id="CHEBI:15378"/>
        <dbReference type="ChEBI" id="CHEBI:33019"/>
        <dbReference type="ChEBI" id="CHEBI:169974"/>
        <dbReference type="ChEBI" id="CHEBI:169975"/>
    </reaction>
    <physiologicalReaction direction="left-to-right" evidence="36">
        <dbReference type="Rhea" id="RHEA:67601"/>
    </physiologicalReaction>
</comment>
<comment type="catalytic activity">
    <reaction evidence="24">
        <text>N(6)-methyl-dATP + H2O = N(6)-methyl-dAMP + diphosphate + H(+)</text>
        <dbReference type="Rhea" id="RHEA:67604"/>
        <dbReference type="ChEBI" id="CHEBI:15377"/>
        <dbReference type="ChEBI" id="CHEBI:15378"/>
        <dbReference type="ChEBI" id="CHEBI:33019"/>
        <dbReference type="ChEBI" id="CHEBI:169976"/>
        <dbReference type="ChEBI" id="CHEBI:172872"/>
    </reaction>
    <physiologicalReaction direction="left-to-right" evidence="37">
        <dbReference type="Rhea" id="RHEA:67605"/>
    </physiologicalReaction>
</comment>
<comment type="catalytic activity">
    <reaction evidence="24">
        <text>N(6)-methyl-ATP + H2O = N(6)-methyl-AMP + diphosphate + H(+)</text>
        <dbReference type="Rhea" id="RHEA:67608"/>
        <dbReference type="ChEBI" id="CHEBI:15377"/>
        <dbReference type="ChEBI" id="CHEBI:15378"/>
        <dbReference type="ChEBI" id="CHEBI:33019"/>
        <dbReference type="ChEBI" id="CHEBI:144842"/>
        <dbReference type="ChEBI" id="CHEBI:172873"/>
    </reaction>
    <physiologicalReaction direction="left-to-right" evidence="37">
        <dbReference type="Rhea" id="RHEA:67609"/>
    </physiologicalReaction>
</comment>
<comment type="cofactor">
    <cofactor evidence="1 34">
        <name>Mg(2+)</name>
        <dbReference type="ChEBI" id="CHEBI:18420"/>
    </cofactor>
    <text evidence="1 34">Binds 2 Mg(2+) ion per subunit.</text>
</comment>
<comment type="activity regulation">
    <text evidence="4">Inhibited by 2-oxo-dADP and 8-oxo-dGDP.</text>
</comment>
<comment type="biophysicochemical properties">
    <kinetics>
        <KM evidence="4">8.3 uM for 2-oxo-dATP (at 30 degrees Celsius and pH 8.0)</KM>
        <KM evidence="4">5.7 uM for 2-oxo-dATP (at 30 degrees Celsius and pH 7.2)</KM>
        <KM evidence="7">4.3 uM for 2-oxo-ATP (at 30 degrees Celsius and pH 8.0)</KM>
        <KM evidence="4">13.9 uM for 8-oxo-dATP (at 30 degrees Celsius and pH 8.0)</KM>
        <KM evidence="4">15.2 uM for 8-oxo-dGTP (at 30 degrees Celsius and pH 8.0)</KM>
        <KM evidence="4">12.8 uM for 8-oxo-dGTP (at 30 degrees Celsius and pH 7.2)</KM>
        <KM evidence="15">13.2 uM for 8-oxo-dGTP (at 22 degrees Celsius and pH 7.5)</KM>
        <KM evidence="7">258 uM for dGTP (at 30 degrees Celsius and pH 8.0)</KM>
        <KM evidence="24">40.9 uM for N(6)-methyl-dATP (at pH 7.5)</KM>
        <KM evidence="23">15.6 uM for O(6)-methyl-dGTP (at 22 degrees Celsius and pH 7.5)</KM>
        <KM evidence="24">16.5 uM for O(6)-methyl-dGTP (at pH 7.5)</KM>
        <KM evidence="23">236 uM for O(6)-methyl-GTP (at 22 degrees Celsius and pH 7.5)</KM>
        <text evidence="4 7 23 24">kcat is 13.9 sec(-1) with 2-oxo-dATP as substrate (at 30 degrees Celsius and pH 8.0) (PubMed:10373420). kcat is 4.7 sec(-1) with 2-oxo-dATP as substrate (at 30 degrees Celsius and pH 7.2) (PubMed:10373420). kcat is 4.7 sec(-1) with 2-oxo-ATP as substrate (at 30 degrees Celsius and pH 8.0) (PubMed:11139615). kcat is 12.3 sec(-1) with 8-oxo-dGTP as substrate (at 30 degrees Celsius and pH 8.0) (PubMed:10373420). kcat is 2.1 sec(-1) with 8-oxo-dGTP as substrate (at 30 degrees Celsius and pH 7.2) (PubMed:10373420). kcat is 10.8 sec(-1) with 8-oxo-dATP as substrate (at 30 degrees Celsius and pH 8.0) (PubMed:10373420). kcat is 5.4 sec(-1) with O(6)-methyl-dGTP as substrate (at pH 7.5) (PubMed:32144205). kcat is 2.0 sec(-1) with N(6)-methyl-dATP as substrate (at pH 7.5) (PubMed:32144205). kcat is 8.2 sec(-1) with O(6)-methyl-dGTP as substrate (PubMed:30304478). kcat is 0.3 sec(-1) with O(6)-methyl-GTP as substrate (PubMed:30304478). Shows the best catalytic efficiency for the 2-oxo-dATP substrate (PubMed:10373420, PubMed:11139615). Shows a similar catalytic efficiency for 8-oxo-dGTP and O(6)-methyl-dGTP (PubMed:30304478).</text>
    </kinetics>
    <phDependence>
        <text evidence="4 7 15">Optimum pH is 7.8-8.2 with 8-oxo-dGTP as substrate, and 8.0-8.5 with 2-oxo-dATP as substrate.</text>
    </phDependence>
</comment>
<comment type="subunit">
    <text evidence="10 15">Monomer.</text>
</comment>
<comment type="interaction">
    <interactant intactId="EBI-1048967">
        <id>P36639</id>
    </interactant>
    <interactant intactId="EBI-742064">
        <id>Q03154</id>
        <label>ACY1</label>
    </interactant>
    <organismsDiffer>false</organismsDiffer>
    <experiments>3</experiments>
</comment>
<comment type="interaction">
    <interactant intactId="EBI-1048967">
        <id>P36639</id>
    </interactant>
    <interactant intactId="EBI-10207332">
        <id>V9HWA0</id>
        <label>HEL-S-5</label>
    </interactant>
    <organismsDiffer>false</organismsDiffer>
    <experiments>3</experiments>
</comment>
<comment type="interaction">
    <interactant intactId="EBI-12380931">
        <id>P36639-2</id>
    </interactant>
    <interactant intactId="EBI-742064">
        <id>Q03154</id>
        <label>ACY1</label>
    </interactant>
    <organismsDiffer>false</organismsDiffer>
    <experiments>4</experiments>
</comment>
<comment type="interaction">
    <interactant intactId="EBI-12380931">
        <id>P36639-2</id>
    </interactant>
    <interactant intactId="EBI-12414373">
        <id>Q8IVF7-3</id>
        <label>FMNL3</label>
    </interactant>
    <organismsDiffer>false</organismsDiffer>
    <experiments>3</experiments>
</comment>
<comment type="interaction">
    <interactant intactId="EBI-12380931">
        <id>P36639-2</id>
    </interactant>
    <interactant intactId="EBI-10242598">
        <id>Q53H54</id>
        <label>TRMT12</label>
    </interactant>
    <organismsDiffer>false</organismsDiffer>
    <experiments>3</experiments>
</comment>
<comment type="interaction">
    <interactant intactId="EBI-25834643">
        <id>P36639-4</id>
    </interactant>
    <interactant intactId="EBI-718729">
        <id>P55212</id>
        <label>CASP6</label>
    </interactant>
    <organismsDiffer>false</organismsDiffer>
    <experiments>3</experiments>
</comment>
<comment type="interaction">
    <interactant intactId="EBI-25834643">
        <id>P36639-4</id>
    </interactant>
    <interactant intactId="EBI-473886">
        <id>O00291</id>
        <label>HIP1</label>
    </interactant>
    <organismsDiffer>false</organismsDiffer>
    <experiments>3</experiments>
</comment>
<comment type="interaction">
    <interactant intactId="EBI-25834643">
        <id>P36639-4</id>
    </interactant>
    <interactant intactId="EBI-712096">
        <id>P30519</id>
        <label>HMOX2</label>
    </interactant>
    <organismsDiffer>false</organismsDiffer>
    <experiments>3</experiments>
</comment>
<comment type="interaction">
    <interactant intactId="EBI-25834643">
        <id>P36639-4</id>
    </interactant>
    <interactant intactId="EBI-352682">
        <id>P04792</id>
        <label>HSPB1</label>
    </interactant>
    <organismsDiffer>false</organismsDiffer>
    <experiments>3</experiments>
</comment>
<comment type="interaction">
    <interactant intactId="EBI-25834643">
        <id>P36639-4</id>
    </interactant>
    <interactant intactId="EBI-466029">
        <id>P42858</id>
        <label>HTT</label>
    </interactant>
    <organismsDiffer>false</organismsDiffer>
    <experiments>6</experiments>
</comment>
<comment type="interaction">
    <interactant intactId="EBI-25834643">
        <id>P36639-4</id>
    </interactant>
    <interactant intactId="EBI-10975473">
        <id>O60333-2</id>
        <label>KIF1B</label>
    </interactant>
    <organismsDiffer>false</organismsDiffer>
    <experiments>3</experiments>
</comment>
<comment type="interaction">
    <interactant intactId="EBI-25834643">
        <id>P36639-4</id>
    </interactant>
    <interactant intactId="EBI-21591415">
        <id>P13473-2</id>
        <label>LAMP2</label>
    </interactant>
    <organismsDiffer>false</organismsDiffer>
    <experiments>3</experiments>
</comment>
<comment type="interaction">
    <interactant intactId="EBI-25834643">
        <id>P36639-4</id>
    </interactant>
    <interactant intactId="EBI-286642">
        <id>P62826</id>
        <label>RAN</label>
    </interactant>
    <organismsDiffer>false</organismsDiffer>
    <experiments>3</experiments>
</comment>
<comment type="interaction">
    <interactant intactId="EBI-25834643">
        <id>P36639-4</id>
    </interactant>
    <interactant intactId="EBI-396669">
        <id>Q9Y3C5</id>
        <label>RNF11</label>
    </interactant>
    <organismsDiffer>false</organismsDiffer>
    <experiments>3</experiments>
</comment>
<comment type="interaction">
    <interactant intactId="EBI-25834643">
        <id>P36639-4</id>
    </interactant>
    <interactant intactId="EBI-720609">
        <id>O76024</id>
        <label>WFS1</label>
    </interactant>
    <organismsDiffer>false</organismsDiffer>
    <experiments>3</experiments>
</comment>
<comment type="subcellular location">
    <molecule>Isoform p18</molecule>
    <subcellularLocation>
        <location evidence="9 13 26">Cytoplasm</location>
        <location evidence="9 13 26">Cytosol</location>
    </subcellularLocation>
    <subcellularLocation>
        <location evidence="26 33 35">Mitochondrion matrix</location>
    </subcellularLocation>
    <subcellularLocation>
        <location evidence="9 26">Nucleus</location>
    </subcellularLocation>
    <text evidence="13 26">Mostly present in cytosol (PubMed:7782328). A minor proportion is mitochondrial (PubMed:7782328). A very small amount of the protein is associated with nuclei (PubMed:7782328).</text>
</comment>
<comment type="subcellular location">
    <molecule>Isoform p26</molecule>
    <subcellularLocation>
        <location evidence="13">Mitochondrion matrix</location>
    </subcellularLocation>
</comment>
<comment type="alternative products">
    <event type="alternative initiation"/>
    <isoform>
        <id>P36639-4</id>
        <name>p18</name>
        <sequence type="displayed"/>
    </isoform>
    <isoform>
        <id>P36639-1</id>
        <name>p26</name>
        <sequence type="described" ref="VSP_061190"/>
    </isoform>
    <isoform>
        <id>P36639-2</id>
        <name>p22</name>
        <sequence type="described" ref="VSP_061189"/>
    </isoform>
    <isoform>
        <id>P36639-3</id>
        <name>p21</name>
        <sequence type="described" ref="VSP_061188"/>
    </isoform>
</comment>
<comment type="tissue specificity">
    <text evidence="28">Widely expressed with highest expression in thymus, testis, embryo and proliferating blood lymphocytes.</text>
</comment>
<comment type="developmental stage">
    <text evidence="28">In peripheral blood lymphocytes, expressed at much higher levels in proliferating cells than in resting cells.</text>
</comment>
<comment type="PTM">
    <text>The N-terminus is blocked.</text>
</comment>
<comment type="polymorphism">
    <text evidence="5">A polymorphism between Met-1 and Met-19 removes a stop codon before the initiation codon for isoform p22 and gives rise to the production of isoform p26. The allele frequency of isoform p26 is about 20%.</text>
</comment>
<comment type="miscellaneous">
    <molecule>Isoform p26</molecule>
    <text evidence="2">Contains a predicted transit peptide (1-18) for localization to the mitochondrion.</text>
</comment>
<comment type="miscellaneous">
    <molecule>Isoform p26</molecule>
    <text>Derived from a B-type mRNA with a polymorphic alteration (GU--&gt;GC) at the beginning of exon 2c that converts an in-frame UGA to CGA yielding another in-frame AUG further upstream.</text>
</comment>
<comment type="similarity">
    <text evidence="30">Belongs to the Nudix hydrolase family.</text>
</comment>
<comment type="caution">
    <text evidence="17 18 22">The role in cancer cell survival is under debate. Was originally considered to play a role as a sanitizing enzyme for oxidized nucleotide pools, and thus important for the survival of cancer cells (PubMed:24695224, PubMed:24695225). A later study indicates that NUDT1 plays a redundant role in eliminating oxidized nucleotides and that it is not essential for cancer cell proliferation and survival (PubMed:28679043).</text>
</comment>
<evidence type="ECO:0000250" key="1">
    <source>
        <dbReference type="UniProtKB" id="Q7ZWC3"/>
    </source>
</evidence>
<evidence type="ECO:0000255" key="2"/>
<evidence type="ECO:0000255" key="3">
    <source>
        <dbReference type="PROSITE-ProRule" id="PRU00794"/>
    </source>
</evidence>
<evidence type="ECO:0000269" key="4">
    <source>
    </source>
</evidence>
<evidence type="ECO:0000269" key="5">
    <source>
    </source>
</evidence>
<evidence type="ECO:0000269" key="6">
    <source>
    </source>
</evidence>
<evidence type="ECO:0000269" key="7">
    <source>
    </source>
</evidence>
<evidence type="ECO:0000269" key="8">
    <source>
    </source>
</evidence>
<evidence type="ECO:0000269" key="9">
    <source>
    </source>
</evidence>
<evidence type="ECO:0000269" key="10">
    <source>
    </source>
</evidence>
<evidence type="ECO:0000269" key="11">
    <source>
    </source>
</evidence>
<evidence type="ECO:0000269" key="12">
    <source>
    </source>
</evidence>
<evidence type="ECO:0000269" key="13">
    <source>
    </source>
</evidence>
<evidence type="ECO:0000269" key="14">
    <source>
    </source>
</evidence>
<evidence type="ECO:0000269" key="15">
    <source>
    </source>
</evidence>
<evidence type="ECO:0000269" key="16">
    <source>
    </source>
</evidence>
<evidence type="ECO:0000269" key="17">
    <source>
    </source>
</evidence>
<evidence type="ECO:0000269" key="18">
    <source>
    </source>
</evidence>
<evidence type="ECO:0000269" key="19">
    <source>
    </source>
</evidence>
<evidence type="ECO:0000269" key="20">
    <source>
    </source>
</evidence>
<evidence type="ECO:0000269" key="21">
    <source>
    </source>
</evidence>
<evidence type="ECO:0000269" key="22">
    <source>
    </source>
</evidence>
<evidence type="ECO:0000269" key="23">
    <source>
    </source>
</evidence>
<evidence type="ECO:0000269" key="24">
    <source>
    </source>
</evidence>
<evidence type="ECO:0000269" key="25">
    <source>
    </source>
</evidence>
<evidence type="ECO:0000269" key="26">
    <source>
    </source>
</evidence>
<evidence type="ECO:0000269" key="27">
    <source>
    </source>
</evidence>
<evidence type="ECO:0000269" key="28">
    <source>
    </source>
</evidence>
<evidence type="ECO:0000303" key="29">
    <source>
    </source>
</evidence>
<evidence type="ECO:0000305" key="30"/>
<evidence type="ECO:0000305" key="31">
    <source>
    </source>
</evidence>
<evidence type="ECO:0000305" key="32">
    <source>
    </source>
</evidence>
<evidence type="ECO:0000305" key="33">
    <source>
    </source>
</evidence>
<evidence type="ECO:0000305" key="34">
    <source>
    </source>
</evidence>
<evidence type="ECO:0000305" key="35">
    <source>
    </source>
</evidence>
<evidence type="ECO:0000305" key="36">
    <source>
    </source>
</evidence>
<evidence type="ECO:0000305" key="37">
    <source>
    </source>
</evidence>
<evidence type="ECO:0007744" key="38">
    <source>
        <dbReference type="PDB" id="1IRY"/>
    </source>
</evidence>
<evidence type="ECO:0007744" key="39">
    <source>
        <dbReference type="PDB" id="3ZR0"/>
    </source>
</evidence>
<evidence type="ECO:0007744" key="40">
    <source>
        <dbReference type="PDB" id="3ZR1"/>
    </source>
</evidence>
<evidence type="ECO:0007744" key="41">
    <source>
        <dbReference type="PDB" id="4C9W"/>
    </source>
</evidence>
<evidence type="ECO:0007744" key="42">
    <source>
        <dbReference type="PDB" id="4C9X"/>
    </source>
</evidence>
<evidence type="ECO:0007744" key="43">
    <source>
        <dbReference type="PDB" id="4N1T"/>
    </source>
</evidence>
<evidence type="ECO:0007744" key="44">
    <source>
        <dbReference type="PDB" id="4N1U"/>
    </source>
</evidence>
<evidence type="ECO:0007744" key="45">
    <source>
        <dbReference type="PDB" id="5FSI"/>
    </source>
</evidence>
<evidence type="ECO:0007744" key="46">
    <source>
        <dbReference type="PDB" id="5FSK"/>
    </source>
</evidence>
<evidence type="ECO:0007744" key="47">
    <source>
        <dbReference type="PDB" id="5FSL"/>
    </source>
</evidence>
<evidence type="ECO:0007744" key="48">
    <source>
        <dbReference type="PDB" id="5FSM"/>
    </source>
</evidence>
<evidence type="ECO:0007744" key="49">
    <source>
        <dbReference type="PDB" id="5FSN"/>
    </source>
</evidence>
<evidence type="ECO:0007744" key="50">
    <source>
        <dbReference type="PDB" id="5FSO"/>
    </source>
</evidence>
<evidence type="ECO:0007744" key="51">
    <source>
        <dbReference type="PDB" id="5GHI"/>
    </source>
</evidence>
<evidence type="ECO:0007744" key="52">
    <source>
        <dbReference type="PDB" id="5GHJ"/>
    </source>
</evidence>
<evidence type="ECO:0007744" key="53">
    <source>
        <dbReference type="PDB" id="5GHM"/>
    </source>
</evidence>
<evidence type="ECO:0007744" key="54">
    <source>
        <dbReference type="PDB" id="5GHN"/>
    </source>
</evidence>
<evidence type="ECO:0007744" key="55">
    <source>
        <dbReference type="PDB" id="5GHO"/>
    </source>
</evidence>
<evidence type="ECO:0007744" key="56">
    <source>
        <dbReference type="PDB" id="5GHP"/>
    </source>
</evidence>
<evidence type="ECO:0007744" key="57">
    <source>
        <dbReference type="PDB" id="5GHQ"/>
    </source>
</evidence>
<evidence type="ECO:0007744" key="58">
    <source>
        <dbReference type="PDB" id="5NHY"/>
    </source>
</evidence>
<evidence type="ECO:0007744" key="59">
    <source>
        <dbReference type="PDB" id="5OTM"/>
    </source>
</evidence>
<evidence type="ECO:0007744" key="60">
    <source>
        <dbReference type="PDB" id="5WS7"/>
    </source>
</evidence>
<evidence type="ECO:0007744" key="61">
    <source>
        <dbReference type="PDB" id="6QVO"/>
    </source>
</evidence>
<evidence type="ECO:0007829" key="62">
    <source>
        <dbReference type="PDB" id="5WS7"/>
    </source>
</evidence>
<evidence type="ECO:0007829" key="63">
    <source>
        <dbReference type="PDB" id="6IJY"/>
    </source>
</evidence>
<evidence type="ECO:0007829" key="64">
    <source>
        <dbReference type="PDB" id="7N03"/>
    </source>
</evidence>
<dbReference type="EC" id="3.6.1.56" evidence="4 7 8 9 13 17 18"/>
<dbReference type="EC" id="3.6.1.-" evidence="23 24"/>
<dbReference type="EMBL" id="D16581">
    <property type="protein sequence ID" value="BAA04013.1"/>
    <property type="molecule type" value="mRNA"/>
</dbReference>
<dbReference type="EMBL" id="D38594">
    <property type="protein sequence ID" value="BAA07601.1"/>
    <property type="molecule type" value="Genomic_DNA"/>
</dbReference>
<dbReference type="EMBL" id="AB025233">
    <property type="protein sequence ID" value="BAA83791.1"/>
    <property type="molecule type" value="mRNA"/>
</dbReference>
<dbReference type="EMBL" id="AB025234">
    <property type="protein sequence ID" value="BAA83792.1"/>
    <property type="molecule type" value="mRNA"/>
</dbReference>
<dbReference type="EMBL" id="AB025235">
    <property type="protein sequence ID" value="BAA83793.1"/>
    <property type="molecule type" value="mRNA"/>
</dbReference>
<dbReference type="EMBL" id="AB025236">
    <property type="protein sequence ID" value="BAA83794.1"/>
    <property type="molecule type" value="mRNA"/>
</dbReference>
<dbReference type="EMBL" id="AB025237">
    <property type="protein sequence ID" value="BAA83795.1"/>
    <property type="molecule type" value="mRNA"/>
</dbReference>
<dbReference type="EMBL" id="AB025238">
    <property type="protein sequence ID" value="BAA83796.1"/>
    <property type="molecule type" value="mRNA"/>
</dbReference>
<dbReference type="EMBL" id="AB025239">
    <property type="protein sequence ID" value="BAA83797.1"/>
    <property type="molecule type" value="mRNA"/>
</dbReference>
<dbReference type="EMBL" id="AB025240">
    <property type="protein sequence ID" value="BAA83798.1"/>
    <property type="molecule type" value="mRNA"/>
</dbReference>
<dbReference type="EMBL" id="AB025241">
    <property type="protein sequence ID" value="BAA83799.1"/>
    <property type="molecule type" value="mRNA"/>
</dbReference>
<dbReference type="EMBL" id="AB025242">
    <property type="protein sequence ID" value="BAA83800.1"/>
    <property type="molecule type" value="mRNA"/>
</dbReference>
<dbReference type="EMBL" id="DQ230907">
    <property type="protein sequence ID" value="ABB02181.1"/>
    <property type="molecule type" value="Genomic_DNA"/>
</dbReference>
<dbReference type="EMBL" id="CH236953">
    <property type="protein sequence ID" value="EAL23948.1"/>
    <property type="molecule type" value="Genomic_DNA"/>
</dbReference>
<dbReference type="EMBL" id="CH236953">
    <property type="protein sequence ID" value="EAL23949.1"/>
    <property type="molecule type" value="Genomic_DNA"/>
</dbReference>
<dbReference type="EMBL" id="CR407655">
    <property type="protein sequence ID" value="CAG28583.1"/>
    <property type="molecule type" value="mRNA"/>
</dbReference>
<dbReference type="EMBL" id="CH471144">
    <property type="protein sequence ID" value="EAW87225.1"/>
    <property type="molecule type" value="Genomic_DNA"/>
</dbReference>
<dbReference type="EMBL" id="CH471144">
    <property type="protein sequence ID" value="EAW87227.1"/>
    <property type="molecule type" value="Genomic_DNA"/>
</dbReference>
<dbReference type="EMBL" id="AC004971">
    <property type="status" value="NOT_ANNOTATED_CDS"/>
    <property type="molecule type" value="Genomic_DNA"/>
</dbReference>
<dbReference type="EMBL" id="BC014618">
    <property type="protein sequence ID" value="AAH14618.1"/>
    <property type="molecule type" value="mRNA"/>
</dbReference>
<dbReference type="EMBL" id="BC040144">
    <property type="protein sequence ID" value="AAH40144.2"/>
    <property type="molecule type" value="mRNA"/>
</dbReference>
<dbReference type="EMBL" id="BC051375">
    <property type="protein sequence ID" value="AAH51375.2"/>
    <property type="molecule type" value="mRNA"/>
</dbReference>
<dbReference type="EMBL" id="BC065367">
    <property type="protein sequence ID" value="AAH65367.1"/>
    <property type="molecule type" value="mRNA"/>
</dbReference>
<dbReference type="CCDS" id="CCDS5329.1">
    <molecule id="P36639-2"/>
</dbReference>
<dbReference type="CCDS" id="CCDS5330.1">
    <molecule id="P36639-4"/>
</dbReference>
<dbReference type="RefSeq" id="NP_001354482.1">
    <molecule id="P36639-4"/>
    <property type="nucleotide sequence ID" value="NM_001367553.1"/>
</dbReference>
<dbReference type="RefSeq" id="NP_002443.3">
    <molecule id="P36639-4"/>
    <property type="nucleotide sequence ID" value="NM_002452.3"/>
</dbReference>
<dbReference type="RefSeq" id="NP_945186.1">
    <molecule id="P36639-4"/>
    <property type="nucleotide sequence ID" value="NM_198948.2"/>
</dbReference>
<dbReference type="RefSeq" id="NP_945187.1">
    <molecule id="P36639-2"/>
    <property type="nucleotide sequence ID" value="NM_198949.2"/>
</dbReference>
<dbReference type="RefSeq" id="NP_945188.1">
    <molecule id="P36639-4"/>
    <property type="nucleotide sequence ID" value="NM_198950.2"/>
</dbReference>
<dbReference type="RefSeq" id="NP_945190.1">
    <molecule id="P36639-2"/>
    <property type="nucleotide sequence ID" value="NM_198952.2"/>
</dbReference>
<dbReference type="RefSeq" id="NP_945191.1">
    <molecule id="P36639-4"/>
    <property type="nucleotide sequence ID" value="NM_198953.1"/>
</dbReference>
<dbReference type="RefSeq" id="NP_945192.1">
    <molecule id="P36639-2"/>
    <property type="nucleotide sequence ID" value="NM_198954.1"/>
</dbReference>
<dbReference type="PDB" id="1IRY">
    <property type="method" value="NMR"/>
    <property type="chains" value="A=1-156"/>
</dbReference>
<dbReference type="PDB" id="3Q93">
    <property type="method" value="X-ray"/>
    <property type="resolution" value="1.80 A"/>
    <property type="chains" value="A/B=1-156"/>
</dbReference>
<dbReference type="PDB" id="3WHW">
    <property type="method" value="X-ray"/>
    <property type="resolution" value="2.70 A"/>
    <property type="chains" value="A/B=1-156"/>
</dbReference>
<dbReference type="PDB" id="3ZR0">
    <property type="method" value="X-ray"/>
    <property type="resolution" value="1.80 A"/>
    <property type="chains" value="A/B=1-156"/>
</dbReference>
<dbReference type="PDB" id="3ZR1">
    <property type="method" value="X-ray"/>
    <property type="resolution" value="1.90 A"/>
    <property type="chains" value="A/B=1-156"/>
</dbReference>
<dbReference type="PDB" id="4C9W">
    <property type="method" value="X-ray"/>
    <property type="resolution" value="1.65 A"/>
    <property type="chains" value="A=1-156"/>
</dbReference>
<dbReference type="PDB" id="4C9X">
    <property type="method" value="X-ray"/>
    <property type="resolution" value="1.20 A"/>
    <property type="chains" value="A=1-156"/>
</dbReference>
<dbReference type="PDB" id="4N1T">
    <property type="method" value="X-ray"/>
    <property type="resolution" value="1.60 A"/>
    <property type="chains" value="A=1-156"/>
</dbReference>
<dbReference type="PDB" id="4N1U">
    <property type="method" value="X-ray"/>
    <property type="resolution" value="1.60 A"/>
    <property type="chains" value="A/B=1-155"/>
</dbReference>
<dbReference type="PDB" id="5ANS">
    <property type="method" value="X-ray"/>
    <property type="resolution" value="1.60 A"/>
    <property type="chains" value="A=1-156"/>
</dbReference>
<dbReference type="PDB" id="5ANT">
    <property type="method" value="X-ray"/>
    <property type="resolution" value="2.00 A"/>
    <property type="chains" value="A/B/C=1-156"/>
</dbReference>
<dbReference type="PDB" id="5ANU">
    <property type="method" value="X-ray"/>
    <property type="resolution" value="1.80 A"/>
    <property type="chains" value="A=1-156"/>
</dbReference>
<dbReference type="PDB" id="5ANV">
    <property type="method" value="X-ray"/>
    <property type="resolution" value="1.16 A"/>
    <property type="chains" value="A=1-156"/>
</dbReference>
<dbReference type="PDB" id="5ANW">
    <property type="method" value="X-ray"/>
    <property type="resolution" value="1.37 A"/>
    <property type="chains" value="A=1-156"/>
</dbReference>
<dbReference type="PDB" id="5FSI">
    <property type="method" value="X-ray"/>
    <property type="resolution" value="1.63 A"/>
    <property type="chains" value="A=1-156"/>
</dbReference>
<dbReference type="PDB" id="5FSK">
    <property type="method" value="X-ray"/>
    <property type="resolution" value="1.56 A"/>
    <property type="chains" value="A=1-156"/>
</dbReference>
<dbReference type="PDB" id="5FSL">
    <property type="method" value="X-ray"/>
    <property type="resolution" value="1.24 A"/>
    <property type="chains" value="A=1-156"/>
</dbReference>
<dbReference type="PDB" id="5FSM">
    <property type="method" value="X-ray"/>
    <property type="resolution" value="1.67 A"/>
    <property type="chains" value="A=1-156"/>
</dbReference>
<dbReference type="PDB" id="5FSN">
    <property type="method" value="X-ray"/>
    <property type="resolution" value="1.69 A"/>
    <property type="chains" value="A=1-156"/>
</dbReference>
<dbReference type="PDB" id="5FSO">
    <property type="method" value="X-ray"/>
    <property type="resolution" value="1.67 A"/>
    <property type="chains" value="A=1-156"/>
</dbReference>
<dbReference type="PDB" id="5GHI">
    <property type="method" value="X-ray"/>
    <property type="resolution" value="1.21 A"/>
    <property type="chains" value="A/B=1-156"/>
</dbReference>
<dbReference type="PDB" id="5GHJ">
    <property type="method" value="X-ray"/>
    <property type="resolution" value="1.20 A"/>
    <property type="chains" value="A/B=1-156"/>
</dbReference>
<dbReference type="PDB" id="5GHM">
    <property type="method" value="X-ray"/>
    <property type="resolution" value="1.50 A"/>
    <property type="chains" value="A/B=1-156"/>
</dbReference>
<dbReference type="PDB" id="5GHN">
    <property type="method" value="X-ray"/>
    <property type="resolution" value="1.39 A"/>
    <property type="chains" value="A/B=1-156"/>
</dbReference>
<dbReference type="PDB" id="5GHO">
    <property type="method" value="X-ray"/>
    <property type="resolution" value="1.19 A"/>
    <property type="chains" value="A/B=1-156"/>
</dbReference>
<dbReference type="PDB" id="5GHP">
    <property type="method" value="X-ray"/>
    <property type="resolution" value="1.19 A"/>
    <property type="chains" value="A/B=1-156"/>
</dbReference>
<dbReference type="PDB" id="5GHQ">
    <property type="method" value="X-ray"/>
    <property type="resolution" value="1.18 A"/>
    <property type="chains" value="A/B=1-156"/>
</dbReference>
<dbReference type="PDB" id="5NGR">
    <property type="method" value="X-ray"/>
    <property type="resolution" value="2.20 A"/>
    <property type="chains" value="A/B=1-156"/>
</dbReference>
<dbReference type="PDB" id="5NGS">
    <property type="method" value="X-ray"/>
    <property type="resolution" value="1.85 A"/>
    <property type="chains" value="A/B=1-156"/>
</dbReference>
<dbReference type="PDB" id="5NGT">
    <property type="method" value="X-ray"/>
    <property type="resolution" value="1.54 A"/>
    <property type="chains" value="A=1-156"/>
</dbReference>
<dbReference type="PDB" id="5NHY">
    <property type="method" value="X-ray"/>
    <property type="resolution" value="1.72 A"/>
    <property type="chains" value="A/B=1-156"/>
</dbReference>
<dbReference type="PDB" id="5OTM">
    <property type="method" value="X-ray"/>
    <property type="resolution" value="1.80 A"/>
    <property type="chains" value="A/B=1-156"/>
</dbReference>
<dbReference type="PDB" id="5WS7">
    <property type="method" value="X-ray"/>
    <property type="resolution" value="1.00 A"/>
    <property type="chains" value="A/B=1-156"/>
</dbReference>
<dbReference type="PDB" id="6AA3">
    <property type="method" value="X-ray"/>
    <property type="resolution" value="2.00 A"/>
    <property type="chains" value="A=3-156"/>
</dbReference>
<dbReference type="PDB" id="6AA4">
    <property type="method" value="X-ray"/>
    <property type="resolution" value="1.90 A"/>
    <property type="chains" value="A=3-156"/>
</dbReference>
<dbReference type="PDB" id="6AA5">
    <property type="method" value="X-ray"/>
    <property type="resolution" value="1.90 A"/>
    <property type="chains" value="A=3-156"/>
</dbReference>
<dbReference type="PDB" id="6EQ2">
    <property type="method" value="X-ray"/>
    <property type="resolution" value="1.80 A"/>
    <property type="chains" value="A=1-156"/>
</dbReference>
<dbReference type="PDB" id="6EQ3">
    <property type="method" value="X-ray"/>
    <property type="resolution" value="1.80 A"/>
    <property type="chains" value="A=1-156"/>
</dbReference>
<dbReference type="PDB" id="6EQ4">
    <property type="method" value="X-ray"/>
    <property type="resolution" value="1.40 A"/>
    <property type="chains" value="A=1-156"/>
</dbReference>
<dbReference type="PDB" id="6EQ5">
    <property type="method" value="X-ray"/>
    <property type="resolution" value="1.80 A"/>
    <property type="chains" value="A=1-156"/>
</dbReference>
<dbReference type="PDB" id="6EQ6">
    <property type="method" value="X-ray"/>
    <property type="resolution" value="2.00 A"/>
    <property type="chains" value="A=1-156"/>
</dbReference>
<dbReference type="PDB" id="6EQ7">
    <property type="method" value="X-ray"/>
    <property type="resolution" value="1.50 A"/>
    <property type="chains" value="A=1-156"/>
</dbReference>
<dbReference type="PDB" id="6F1X">
    <property type="method" value="X-ray"/>
    <property type="resolution" value="1.90 A"/>
    <property type="chains" value="A/B=1-156"/>
</dbReference>
<dbReference type="PDB" id="6F20">
    <property type="method" value="X-ray"/>
    <property type="resolution" value="2.00 A"/>
    <property type="chains" value="A/B=1-156"/>
</dbReference>
<dbReference type="PDB" id="6F22">
    <property type="method" value="X-ray"/>
    <property type="resolution" value="1.55 A"/>
    <property type="chains" value="A/B=1-156"/>
</dbReference>
<dbReference type="PDB" id="6F23">
    <property type="method" value="X-ray"/>
    <property type="resolution" value="1.84 A"/>
    <property type="chains" value="A/B=1-156"/>
</dbReference>
<dbReference type="PDB" id="6GLE">
    <property type="method" value="X-ray"/>
    <property type="resolution" value="1.40 A"/>
    <property type="chains" value="A=1-156"/>
</dbReference>
<dbReference type="PDB" id="6GLF">
    <property type="method" value="X-ray"/>
    <property type="resolution" value="2.00 A"/>
    <property type="chains" value="A=1-156"/>
</dbReference>
<dbReference type="PDB" id="6GLG">
    <property type="method" value="X-ray"/>
    <property type="resolution" value="1.31 A"/>
    <property type="chains" value="A=1-156"/>
</dbReference>
<dbReference type="PDB" id="6GLH">
    <property type="method" value="X-ray"/>
    <property type="resolution" value="1.20 A"/>
    <property type="chains" value="A=1-156"/>
</dbReference>
<dbReference type="PDB" id="6GLI">
    <property type="method" value="X-ray"/>
    <property type="resolution" value="1.60 A"/>
    <property type="chains" value="A=1-156"/>
</dbReference>
<dbReference type="PDB" id="6GLJ">
    <property type="method" value="X-ray"/>
    <property type="resolution" value="1.30 A"/>
    <property type="chains" value="A=1-156"/>
</dbReference>
<dbReference type="PDB" id="6GLK">
    <property type="method" value="X-ray"/>
    <property type="resolution" value="1.50 A"/>
    <property type="chains" value="A=1-156"/>
</dbReference>
<dbReference type="PDB" id="6GLL">
    <property type="method" value="X-ray"/>
    <property type="resolution" value="1.40 A"/>
    <property type="chains" value="A/B=1-156"/>
</dbReference>
<dbReference type="PDB" id="6GLM">
    <property type="method" value="X-ray"/>
    <property type="resolution" value="1.60 A"/>
    <property type="chains" value="A=1-156"/>
</dbReference>
<dbReference type="PDB" id="6GLN">
    <property type="method" value="X-ray"/>
    <property type="resolution" value="1.40 A"/>
    <property type="chains" value="A=1-156"/>
</dbReference>
<dbReference type="PDB" id="6GLO">
    <property type="method" value="X-ray"/>
    <property type="resolution" value="1.70 A"/>
    <property type="chains" value="A/B=1-156"/>
</dbReference>
<dbReference type="PDB" id="6GLP">
    <property type="method" value="X-ray"/>
    <property type="resolution" value="1.50 A"/>
    <property type="chains" value="A/B=1-156"/>
</dbReference>
<dbReference type="PDB" id="6GLQ">
    <property type="method" value="X-ray"/>
    <property type="resolution" value="1.60 A"/>
    <property type="chains" value="A/B=1-156"/>
</dbReference>
<dbReference type="PDB" id="6GLR">
    <property type="method" value="X-ray"/>
    <property type="resolution" value="1.60 A"/>
    <property type="chains" value="A/B=1-156"/>
</dbReference>
<dbReference type="PDB" id="6GLS">
    <property type="method" value="X-ray"/>
    <property type="resolution" value="1.50 A"/>
    <property type="chains" value="A/B=1-156"/>
</dbReference>
<dbReference type="PDB" id="6GLT">
    <property type="method" value="X-ray"/>
    <property type="resolution" value="1.60 A"/>
    <property type="chains" value="A=1-156"/>
</dbReference>
<dbReference type="PDB" id="6GLU">
    <property type="method" value="X-ray"/>
    <property type="resolution" value="1.70 A"/>
    <property type="chains" value="A=1-156"/>
</dbReference>
<dbReference type="PDB" id="6GLV">
    <property type="method" value="X-ray"/>
    <property type="resolution" value="1.60 A"/>
    <property type="chains" value="A=1-156"/>
</dbReference>
<dbReference type="PDB" id="6IJY">
    <property type="method" value="X-ray"/>
    <property type="resolution" value="1.04 A"/>
    <property type="chains" value="A/B=1-156"/>
</dbReference>
<dbReference type="PDB" id="6ILI">
    <property type="method" value="X-ray"/>
    <property type="resolution" value="1.45 A"/>
    <property type="chains" value="A/B=1-156"/>
</dbReference>
<dbReference type="PDB" id="6IMZ">
    <property type="method" value="X-ray"/>
    <property type="resolution" value="2.10 A"/>
    <property type="chains" value="A=3-156"/>
</dbReference>
<dbReference type="PDB" id="6JVF">
    <property type="method" value="X-ray"/>
    <property type="resolution" value="1.73 A"/>
    <property type="chains" value="A/B=1-156"/>
</dbReference>
<dbReference type="PDB" id="6JVG">
    <property type="method" value="X-ray"/>
    <property type="resolution" value="1.84 A"/>
    <property type="chains" value="A/B=1-156"/>
</dbReference>
<dbReference type="PDB" id="6JVH">
    <property type="method" value="X-ray"/>
    <property type="resolution" value="2.04 A"/>
    <property type="chains" value="A/B=1-156"/>
</dbReference>
<dbReference type="PDB" id="6JVI">
    <property type="method" value="X-ray"/>
    <property type="resolution" value="2.25 A"/>
    <property type="chains" value="A/B=1-156"/>
</dbReference>
<dbReference type="PDB" id="6JVJ">
    <property type="method" value="X-ray"/>
    <property type="resolution" value="2.30 A"/>
    <property type="chains" value="A/B=1-156"/>
</dbReference>
<dbReference type="PDB" id="6JVK">
    <property type="method" value="X-ray"/>
    <property type="resolution" value="2.10 A"/>
    <property type="chains" value="A/B=1-156"/>
</dbReference>
<dbReference type="PDB" id="6JVL">
    <property type="method" value="X-ray"/>
    <property type="resolution" value="1.90 A"/>
    <property type="chains" value="A/B=1-156"/>
</dbReference>
<dbReference type="PDB" id="6JVM">
    <property type="method" value="X-ray"/>
    <property type="resolution" value="2.10 A"/>
    <property type="chains" value="A/B=1-156"/>
</dbReference>
<dbReference type="PDB" id="6JVN">
    <property type="method" value="X-ray"/>
    <property type="resolution" value="2.10 A"/>
    <property type="chains" value="A/B=1-156"/>
</dbReference>
<dbReference type="PDB" id="6JVO">
    <property type="method" value="X-ray"/>
    <property type="resolution" value="1.90 A"/>
    <property type="chains" value="A/B=2-156"/>
</dbReference>
<dbReference type="PDB" id="6JVP">
    <property type="method" value="X-ray"/>
    <property type="resolution" value="2.21 A"/>
    <property type="chains" value="A/B=1-156"/>
</dbReference>
<dbReference type="PDB" id="6JVQ">
    <property type="method" value="X-ray"/>
    <property type="resolution" value="2.20 A"/>
    <property type="chains" value="A/B=1-156"/>
</dbReference>
<dbReference type="PDB" id="6JVR">
    <property type="method" value="X-ray"/>
    <property type="resolution" value="2.29 A"/>
    <property type="chains" value="A/B=1-156"/>
</dbReference>
<dbReference type="PDB" id="6JVS">
    <property type="method" value="X-ray"/>
    <property type="resolution" value="2.10 A"/>
    <property type="chains" value="A/B=1-156"/>
</dbReference>
<dbReference type="PDB" id="6JVT">
    <property type="method" value="X-ray"/>
    <property type="resolution" value="1.80 A"/>
    <property type="chains" value="A/B=1-156"/>
</dbReference>
<dbReference type="PDB" id="6QVO">
    <property type="method" value="X-ray"/>
    <property type="resolution" value="2.45 A"/>
    <property type="chains" value="A/B/C/D=1-156"/>
</dbReference>
<dbReference type="PDB" id="6US2">
    <property type="method" value="X-ray"/>
    <property type="resolution" value="1.80 A"/>
    <property type="chains" value="A=1-156"/>
</dbReference>
<dbReference type="PDB" id="6US3">
    <property type="method" value="X-ray"/>
    <property type="resolution" value="1.47 A"/>
    <property type="chains" value="A=1-156"/>
</dbReference>
<dbReference type="PDB" id="6US4">
    <property type="method" value="X-ray"/>
    <property type="resolution" value="1.95 A"/>
    <property type="chains" value="A=1-156"/>
</dbReference>
<dbReference type="PDB" id="7ESF">
    <property type="method" value="X-ray"/>
    <property type="resolution" value="1.55 A"/>
    <property type="chains" value="A=1-156"/>
</dbReference>
<dbReference type="PDB" id="7N03">
    <property type="method" value="X-ray"/>
    <property type="resolution" value="1.13 A"/>
    <property type="chains" value="A=1-156"/>
</dbReference>
<dbReference type="PDB" id="7N13">
    <property type="method" value="X-ray"/>
    <property type="resolution" value="1.59 A"/>
    <property type="chains" value="A/B=1-156"/>
</dbReference>
<dbReference type="PDB" id="8A07">
    <property type="method" value="X-ray"/>
    <property type="resolution" value="2.19 A"/>
    <property type="chains" value="A/B=1-156"/>
</dbReference>
<dbReference type="PDB" id="8A0S">
    <property type="method" value="X-ray"/>
    <property type="resolution" value="1.40 A"/>
    <property type="chains" value="A=1-156"/>
</dbReference>
<dbReference type="PDB" id="8A0T">
    <property type="method" value="X-ray"/>
    <property type="resolution" value="1.90 A"/>
    <property type="chains" value="A/B=1-156"/>
</dbReference>
<dbReference type="PDB" id="8A34">
    <property type="method" value="X-ray"/>
    <property type="resolution" value="1.90 A"/>
    <property type="chains" value="A/B=1-156"/>
</dbReference>
<dbReference type="PDB" id="8A3A">
    <property type="method" value="X-ray"/>
    <property type="resolution" value="1.60 A"/>
    <property type="chains" value="A=1-156"/>
</dbReference>
<dbReference type="PDB" id="8I18">
    <property type="method" value="X-ray"/>
    <property type="resolution" value="1.10 A"/>
    <property type="chains" value="A/B=1-156"/>
</dbReference>
<dbReference type="PDB" id="8I19">
    <property type="method" value="X-ray"/>
    <property type="resolution" value="1.48 A"/>
    <property type="chains" value="A/B=1-156"/>
</dbReference>
<dbReference type="PDB" id="8I1A">
    <property type="method" value="X-ray"/>
    <property type="resolution" value="1.40 A"/>
    <property type="chains" value="A/B=1-156"/>
</dbReference>
<dbReference type="PDB" id="8I1C">
    <property type="method" value="X-ray"/>
    <property type="resolution" value="1.40 A"/>
    <property type="chains" value="A/B=1-156"/>
</dbReference>
<dbReference type="PDB" id="8I1D">
    <property type="method" value="X-ray"/>
    <property type="resolution" value="1.20 A"/>
    <property type="chains" value="A/B=1-156"/>
</dbReference>
<dbReference type="PDB" id="8I1E">
    <property type="method" value="X-ray"/>
    <property type="resolution" value="1.10 A"/>
    <property type="chains" value="A/B=1-156"/>
</dbReference>
<dbReference type="PDB" id="8I1F">
    <property type="method" value="X-ray"/>
    <property type="resolution" value="1.05 A"/>
    <property type="chains" value="A/B=1-156"/>
</dbReference>
<dbReference type="PDB" id="8I1G">
    <property type="method" value="X-ray"/>
    <property type="resolution" value="1.18 A"/>
    <property type="chains" value="A/B=1-156"/>
</dbReference>
<dbReference type="PDB" id="8I1H">
    <property type="method" value="X-ray"/>
    <property type="resolution" value="1.18 A"/>
    <property type="chains" value="A/B=1-156"/>
</dbReference>
<dbReference type="PDB" id="8I1I">
    <property type="method" value="X-ray"/>
    <property type="resolution" value="1.20 A"/>
    <property type="chains" value="A/B=1-156"/>
</dbReference>
<dbReference type="PDB" id="8I1J">
    <property type="method" value="X-ray"/>
    <property type="resolution" value="1.08 A"/>
    <property type="chains" value="A/B=1-156"/>
</dbReference>
<dbReference type="PDB" id="8I8S">
    <property type="method" value="X-ray"/>
    <property type="resolution" value="1.42 A"/>
    <property type="chains" value="A/B=1-156"/>
</dbReference>
<dbReference type="PDB" id="8I8T">
    <property type="method" value="X-ray"/>
    <property type="resolution" value="1.22 A"/>
    <property type="chains" value="A/B=1-156"/>
</dbReference>
<dbReference type="PDBsum" id="1IRY"/>
<dbReference type="PDBsum" id="3Q93"/>
<dbReference type="PDBsum" id="3WHW"/>
<dbReference type="PDBsum" id="3ZR0"/>
<dbReference type="PDBsum" id="3ZR1"/>
<dbReference type="PDBsum" id="4C9W"/>
<dbReference type="PDBsum" id="4C9X"/>
<dbReference type="PDBsum" id="4N1T"/>
<dbReference type="PDBsum" id="4N1U"/>
<dbReference type="PDBsum" id="5ANS"/>
<dbReference type="PDBsum" id="5ANT"/>
<dbReference type="PDBsum" id="5ANU"/>
<dbReference type="PDBsum" id="5ANV"/>
<dbReference type="PDBsum" id="5ANW"/>
<dbReference type="PDBsum" id="5FSI"/>
<dbReference type="PDBsum" id="5FSK"/>
<dbReference type="PDBsum" id="5FSL"/>
<dbReference type="PDBsum" id="5FSM"/>
<dbReference type="PDBsum" id="5FSN"/>
<dbReference type="PDBsum" id="5FSO"/>
<dbReference type="PDBsum" id="5GHI"/>
<dbReference type="PDBsum" id="5GHJ"/>
<dbReference type="PDBsum" id="5GHM"/>
<dbReference type="PDBsum" id="5GHN"/>
<dbReference type="PDBsum" id="5GHO"/>
<dbReference type="PDBsum" id="5GHP"/>
<dbReference type="PDBsum" id="5GHQ"/>
<dbReference type="PDBsum" id="5NGR"/>
<dbReference type="PDBsum" id="5NGS"/>
<dbReference type="PDBsum" id="5NGT"/>
<dbReference type="PDBsum" id="5NHY"/>
<dbReference type="PDBsum" id="5OTM"/>
<dbReference type="PDBsum" id="5WS7"/>
<dbReference type="PDBsum" id="6AA3"/>
<dbReference type="PDBsum" id="6AA4"/>
<dbReference type="PDBsum" id="6AA5"/>
<dbReference type="PDBsum" id="6EQ2"/>
<dbReference type="PDBsum" id="6EQ3"/>
<dbReference type="PDBsum" id="6EQ4"/>
<dbReference type="PDBsum" id="6EQ5"/>
<dbReference type="PDBsum" id="6EQ6"/>
<dbReference type="PDBsum" id="6EQ7"/>
<dbReference type="PDBsum" id="6F1X"/>
<dbReference type="PDBsum" id="6F20"/>
<dbReference type="PDBsum" id="6F22"/>
<dbReference type="PDBsum" id="6F23"/>
<dbReference type="PDBsum" id="6GLE"/>
<dbReference type="PDBsum" id="6GLF"/>
<dbReference type="PDBsum" id="6GLG"/>
<dbReference type="PDBsum" id="6GLH"/>
<dbReference type="PDBsum" id="6GLI"/>
<dbReference type="PDBsum" id="6GLJ"/>
<dbReference type="PDBsum" id="6GLK"/>
<dbReference type="PDBsum" id="6GLL"/>
<dbReference type="PDBsum" id="6GLM"/>
<dbReference type="PDBsum" id="6GLN"/>
<dbReference type="PDBsum" id="6GLO"/>
<dbReference type="PDBsum" id="6GLP"/>
<dbReference type="PDBsum" id="6GLQ"/>
<dbReference type="PDBsum" id="6GLR"/>
<dbReference type="PDBsum" id="6GLS"/>
<dbReference type="PDBsum" id="6GLT"/>
<dbReference type="PDBsum" id="6GLU"/>
<dbReference type="PDBsum" id="6GLV"/>
<dbReference type="PDBsum" id="6IJY"/>
<dbReference type="PDBsum" id="6ILI"/>
<dbReference type="PDBsum" id="6IMZ"/>
<dbReference type="PDBsum" id="6JVF"/>
<dbReference type="PDBsum" id="6JVG"/>
<dbReference type="PDBsum" id="6JVH"/>
<dbReference type="PDBsum" id="6JVI"/>
<dbReference type="PDBsum" id="6JVJ"/>
<dbReference type="PDBsum" id="6JVK"/>
<dbReference type="PDBsum" id="6JVL"/>
<dbReference type="PDBsum" id="6JVM"/>
<dbReference type="PDBsum" id="6JVN"/>
<dbReference type="PDBsum" id="6JVO"/>
<dbReference type="PDBsum" id="6JVP"/>
<dbReference type="PDBsum" id="6JVQ"/>
<dbReference type="PDBsum" id="6JVR"/>
<dbReference type="PDBsum" id="6JVS"/>
<dbReference type="PDBsum" id="6JVT"/>
<dbReference type="PDBsum" id="6QVO"/>
<dbReference type="PDBsum" id="6US2"/>
<dbReference type="PDBsum" id="6US3"/>
<dbReference type="PDBsum" id="6US4"/>
<dbReference type="PDBsum" id="7ESF"/>
<dbReference type="PDBsum" id="7N03"/>
<dbReference type="PDBsum" id="7N13"/>
<dbReference type="PDBsum" id="8A07"/>
<dbReference type="PDBsum" id="8A0S"/>
<dbReference type="PDBsum" id="8A0T"/>
<dbReference type="PDBsum" id="8A34"/>
<dbReference type="PDBsum" id="8A3A"/>
<dbReference type="PDBsum" id="8I18"/>
<dbReference type="PDBsum" id="8I19"/>
<dbReference type="PDBsum" id="8I1A"/>
<dbReference type="PDBsum" id="8I1C"/>
<dbReference type="PDBsum" id="8I1D"/>
<dbReference type="PDBsum" id="8I1E"/>
<dbReference type="PDBsum" id="8I1F"/>
<dbReference type="PDBsum" id="8I1G"/>
<dbReference type="PDBsum" id="8I1H"/>
<dbReference type="PDBsum" id="8I1I"/>
<dbReference type="PDBsum" id="8I1J"/>
<dbReference type="PDBsum" id="8I8S"/>
<dbReference type="PDBsum" id="8I8T"/>
<dbReference type="SMR" id="P36639"/>
<dbReference type="BioGRID" id="110621">
    <property type="interactions" value="81"/>
</dbReference>
<dbReference type="FunCoup" id="P36639">
    <property type="interactions" value="1061"/>
</dbReference>
<dbReference type="IntAct" id="P36639">
    <property type="interactions" value="35"/>
</dbReference>
<dbReference type="MINT" id="P36639"/>
<dbReference type="STRING" id="9606.ENSP00000380241"/>
<dbReference type="BindingDB" id="P36639"/>
<dbReference type="ChEMBL" id="CHEMBL3708265"/>
<dbReference type="DrugCentral" id="P36639"/>
<dbReference type="GlyGen" id="P36639">
    <property type="glycosylation" value="1 site, 1 O-linked glycan (1 site)"/>
</dbReference>
<dbReference type="iPTMnet" id="P36639"/>
<dbReference type="PhosphoSitePlus" id="P36639"/>
<dbReference type="BioMuta" id="NUDT1"/>
<dbReference type="DMDM" id="254763430"/>
<dbReference type="jPOST" id="P36639"/>
<dbReference type="MassIVE" id="P36639"/>
<dbReference type="PaxDb" id="9606-ENSP00000380241"/>
<dbReference type="PeptideAtlas" id="P36639"/>
<dbReference type="ProteomicsDB" id="55217">
    <molecule id="P36639-1"/>
</dbReference>
<dbReference type="ProteomicsDB" id="55218">
    <molecule id="P36639-2"/>
</dbReference>
<dbReference type="ProteomicsDB" id="55219">
    <molecule id="P36639-3"/>
</dbReference>
<dbReference type="ProteomicsDB" id="55220">
    <molecule id="P36639-4"/>
</dbReference>
<dbReference type="Pumba" id="P36639"/>
<dbReference type="TopDownProteomics" id="P36639-4">
    <molecule id="P36639-4"/>
</dbReference>
<dbReference type="Antibodypedia" id="1866">
    <property type="antibodies" value="246 antibodies from 30 providers"/>
</dbReference>
<dbReference type="DNASU" id="4521"/>
<dbReference type="Ensembl" id="ENST00000339737.6">
    <molecule id="P36639-4"/>
    <property type="protein sequence ID" value="ENSP00000343439.2"/>
    <property type="gene ID" value="ENSG00000106268.16"/>
</dbReference>
<dbReference type="Ensembl" id="ENST00000343985.8">
    <molecule id="P36639-2"/>
    <property type="protein sequence ID" value="ENSP00000339503.4"/>
    <property type="gene ID" value="ENSG00000106268.16"/>
</dbReference>
<dbReference type="Ensembl" id="ENST00000356714.6">
    <molecule id="P36639-4"/>
    <property type="protein sequence ID" value="ENSP00000349148.1"/>
    <property type="gene ID" value="ENSG00000106268.16"/>
</dbReference>
<dbReference type="Ensembl" id="ENST00000397046.5">
    <molecule id="P36639-4"/>
    <property type="protein sequence ID" value="ENSP00000380239.1"/>
    <property type="gene ID" value="ENSG00000106268.16"/>
</dbReference>
<dbReference type="Ensembl" id="ENST00000397048.5">
    <molecule id="P36639-2"/>
    <property type="protein sequence ID" value="ENSP00000380241.1"/>
    <property type="gene ID" value="ENSG00000106268.16"/>
</dbReference>
<dbReference type="Ensembl" id="ENST00000397049.2">
    <molecule id="P36639-4"/>
    <property type="protein sequence ID" value="ENSP00000380242.2"/>
    <property type="gene ID" value="ENSG00000106268.16"/>
</dbReference>
<dbReference type="GeneID" id="4521"/>
<dbReference type="KEGG" id="hsa:4521"/>
<dbReference type="MANE-Select" id="ENST00000356714.6">
    <property type="protein sequence ID" value="ENSP00000349148.1"/>
    <property type="RefSeq nucleotide sequence ID" value="NM_002452.4"/>
    <property type="RefSeq protein sequence ID" value="NP_002443.3"/>
</dbReference>
<dbReference type="UCSC" id="uc003slr.1">
    <molecule id="P36639-4"/>
    <property type="organism name" value="human"/>
</dbReference>
<dbReference type="AGR" id="HGNC:8048"/>
<dbReference type="CTD" id="4521"/>
<dbReference type="DisGeNET" id="4521"/>
<dbReference type="GeneCards" id="NUDT1"/>
<dbReference type="HGNC" id="HGNC:8048">
    <property type="gene designation" value="NUDT1"/>
</dbReference>
<dbReference type="HPA" id="ENSG00000106268">
    <property type="expression patterns" value="Tissue enhanced (bone)"/>
</dbReference>
<dbReference type="MIM" id="600312">
    <property type="type" value="gene"/>
</dbReference>
<dbReference type="neXtProt" id="NX_P36639"/>
<dbReference type="OpenTargets" id="ENSG00000106268"/>
<dbReference type="PharmGKB" id="PA31830"/>
<dbReference type="VEuPathDB" id="HostDB:ENSG00000106268"/>
<dbReference type="eggNOG" id="ENOG502S254">
    <property type="taxonomic scope" value="Eukaryota"/>
</dbReference>
<dbReference type="GeneTree" id="ENSGT00390000000341"/>
<dbReference type="HOGENOM" id="CLU_037162_11_1_1"/>
<dbReference type="InParanoid" id="P36639"/>
<dbReference type="OrthoDB" id="408303at2759"/>
<dbReference type="PAN-GO" id="P36639">
    <property type="GO annotations" value="3 GO annotations based on evolutionary models"/>
</dbReference>
<dbReference type="PhylomeDB" id="P36639"/>
<dbReference type="TreeFam" id="TF106348"/>
<dbReference type="BioCyc" id="MetaCyc:HS02879-MONOMER"/>
<dbReference type="BRENDA" id="3.6.1.55">
    <property type="organism ID" value="2681"/>
</dbReference>
<dbReference type="BRENDA" id="3.6.1.56">
    <property type="organism ID" value="2681"/>
</dbReference>
<dbReference type="PathwayCommons" id="P36639"/>
<dbReference type="Reactome" id="R-HSA-2393930">
    <property type="pathway name" value="Phosphate bond hydrolysis by NUDT proteins"/>
</dbReference>
<dbReference type="SABIO-RK" id="P36639"/>
<dbReference type="SignaLink" id="P36639"/>
<dbReference type="SIGNOR" id="P36639"/>
<dbReference type="BioGRID-ORCS" id="4521">
    <property type="hits" value="11 hits in 1161 CRISPR screens"/>
</dbReference>
<dbReference type="ChiTaRS" id="NUDT1">
    <property type="organism name" value="human"/>
</dbReference>
<dbReference type="EvolutionaryTrace" id="P36639"/>
<dbReference type="GeneWiki" id="NUDT1"/>
<dbReference type="GenomeRNAi" id="4521"/>
<dbReference type="Pharos" id="P36639">
    <property type="development level" value="Tchem"/>
</dbReference>
<dbReference type="PRO" id="PR:P36639"/>
<dbReference type="Proteomes" id="UP000005640">
    <property type="component" value="Chromosome 7"/>
</dbReference>
<dbReference type="RNAct" id="P36639">
    <property type="molecule type" value="protein"/>
</dbReference>
<dbReference type="Bgee" id="ENSG00000106268">
    <property type="expression patterns" value="Expressed in primordial germ cell in gonad and 142 other cell types or tissues"/>
</dbReference>
<dbReference type="ExpressionAtlas" id="P36639">
    <property type="expression patterns" value="baseline and differential"/>
</dbReference>
<dbReference type="GO" id="GO:0005737">
    <property type="term" value="C:cytoplasm"/>
    <property type="evidence" value="ECO:0000314"/>
    <property type="project" value="UniProtKB"/>
</dbReference>
<dbReference type="GO" id="GO:0005829">
    <property type="term" value="C:cytosol"/>
    <property type="evidence" value="ECO:0000314"/>
    <property type="project" value="HPA"/>
</dbReference>
<dbReference type="GO" id="GO:0005759">
    <property type="term" value="C:mitochondrial matrix"/>
    <property type="evidence" value="ECO:0000314"/>
    <property type="project" value="UniProtKB"/>
</dbReference>
<dbReference type="GO" id="GO:0005739">
    <property type="term" value="C:mitochondrion"/>
    <property type="evidence" value="ECO:0000314"/>
    <property type="project" value="UniProtKB"/>
</dbReference>
<dbReference type="GO" id="GO:0005634">
    <property type="term" value="C:nucleus"/>
    <property type="evidence" value="ECO:0000314"/>
    <property type="project" value="UniProtKB"/>
</dbReference>
<dbReference type="GO" id="GO:0106377">
    <property type="term" value="F:2-hydroxy-ATP hydrolase activity"/>
    <property type="evidence" value="ECO:0000314"/>
    <property type="project" value="UniProtKB"/>
</dbReference>
<dbReference type="GO" id="GO:0106378">
    <property type="term" value="F:2-hydroxy-dATP hydrolase activity"/>
    <property type="evidence" value="ECO:0000314"/>
    <property type="project" value="UniProtKB"/>
</dbReference>
<dbReference type="GO" id="GO:0035539">
    <property type="term" value="F:8-oxo-7,8-dihydrodeoxyguanosine triphosphate pyrophosphatase activity"/>
    <property type="evidence" value="ECO:0000314"/>
    <property type="project" value="UniProtKB"/>
</dbReference>
<dbReference type="GO" id="GO:0008413">
    <property type="term" value="F:8-oxo-7,8-dihydroguanosine triphosphate pyrophosphatase activity"/>
    <property type="evidence" value="ECO:0000314"/>
    <property type="project" value="UniProtKB"/>
</dbReference>
<dbReference type="GO" id="GO:0047693">
    <property type="term" value="F:ATP diphosphatase activity"/>
    <property type="evidence" value="ECO:0000314"/>
    <property type="project" value="UniProtKB"/>
</dbReference>
<dbReference type="GO" id="GO:0008828">
    <property type="term" value="F:dATP diphosphatase activity"/>
    <property type="evidence" value="ECO:0000314"/>
    <property type="project" value="GO_Central"/>
</dbReference>
<dbReference type="GO" id="GO:0016818">
    <property type="term" value="F:hydrolase activity, acting on acid anhydrides, in phosphorus-containing anhydrides"/>
    <property type="evidence" value="ECO:0000314"/>
    <property type="project" value="ZFIN"/>
</dbReference>
<dbReference type="GO" id="GO:0046872">
    <property type="term" value="F:metal ion binding"/>
    <property type="evidence" value="ECO:0007669"/>
    <property type="project" value="UniProtKB-KW"/>
</dbReference>
<dbReference type="GO" id="GO:0106431">
    <property type="term" value="F:N6-methyl-(d)ATP hydrolase activity"/>
    <property type="evidence" value="ECO:0007669"/>
    <property type="project" value="RHEA"/>
</dbReference>
<dbReference type="GO" id="GO:0106433">
    <property type="term" value="F:O6-methyl-dGTP hydrolase activity"/>
    <property type="evidence" value="ECO:0007669"/>
    <property type="project" value="RHEA"/>
</dbReference>
<dbReference type="GO" id="GO:0030515">
    <property type="term" value="F:snoRNA binding"/>
    <property type="evidence" value="ECO:0000250"/>
    <property type="project" value="UniProtKB"/>
</dbReference>
<dbReference type="GO" id="GO:0042262">
    <property type="term" value="P:DNA protection"/>
    <property type="evidence" value="ECO:0000314"/>
    <property type="project" value="UniProtKB"/>
</dbReference>
<dbReference type="GO" id="GO:0006281">
    <property type="term" value="P:DNA repair"/>
    <property type="evidence" value="ECO:0000305"/>
    <property type="project" value="UniProtKB"/>
</dbReference>
<dbReference type="GO" id="GO:0006152">
    <property type="term" value="P:purine nucleoside catabolic process"/>
    <property type="evidence" value="ECO:0000314"/>
    <property type="project" value="UniProtKB"/>
</dbReference>
<dbReference type="GO" id="GO:0006979">
    <property type="term" value="P:response to oxidative stress"/>
    <property type="evidence" value="ECO:0000304"/>
    <property type="project" value="ProtInc"/>
</dbReference>
<dbReference type="CDD" id="cd03427">
    <property type="entry name" value="NUDIX_MTH1_Nudt1"/>
    <property type="match status" value="1"/>
</dbReference>
<dbReference type="FunFam" id="3.90.79.10:FF:000043">
    <property type="entry name" value="7,8-dihydro-8-oxoguanine triphosphatase"/>
    <property type="match status" value="1"/>
</dbReference>
<dbReference type="Gene3D" id="3.90.79.10">
    <property type="entry name" value="Nucleoside Triphosphate Pyrophosphohydrolase"/>
    <property type="match status" value="1"/>
</dbReference>
<dbReference type="InterPro" id="IPR003563">
    <property type="entry name" value="8ODP"/>
</dbReference>
<dbReference type="InterPro" id="IPR020476">
    <property type="entry name" value="Nudix_hydrolase"/>
</dbReference>
<dbReference type="InterPro" id="IPR015797">
    <property type="entry name" value="NUDIX_hydrolase-like_dom_sf"/>
</dbReference>
<dbReference type="InterPro" id="IPR020084">
    <property type="entry name" value="NUDIX_hydrolase_CS"/>
</dbReference>
<dbReference type="InterPro" id="IPR000086">
    <property type="entry name" value="NUDIX_hydrolase_dom"/>
</dbReference>
<dbReference type="PANTHER" id="PTHR43758">
    <property type="entry name" value="7,8-DIHYDRO-8-OXOGUANINE TRIPHOSPHATASE"/>
    <property type="match status" value="1"/>
</dbReference>
<dbReference type="PANTHER" id="PTHR43758:SF2">
    <property type="entry name" value="OXIDIZED PURINE NUCLEOSIDE TRIPHOSPHATE HYDROLASE"/>
    <property type="match status" value="1"/>
</dbReference>
<dbReference type="Pfam" id="PF00293">
    <property type="entry name" value="NUDIX"/>
    <property type="match status" value="1"/>
</dbReference>
<dbReference type="PRINTS" id="PR01403">
    <property type="entry name" value="8OXTPHPHTASE"/>
</dbReference>
<dbReference type="PRINTS" id="PR00502">
    <property type="entry name" value="NUDIXFAMILY"/>
</dbReference>
<dbReference type="SUPFAM" id="SSF55811">
    <property type="entry name" value="Nudix"/>
    <property type="match status" value="1"/>
</dbReference>
<dbReference type="PROSITE" id="PS51462">
    <property type="entry name" value="NUDIX"/>
    <property type="match status" value="1"/>
</dbReference>
<dbReference type="PROSITE" id="PS00893">
    <property type="entry name" value="NUDIX_BOX"/>
    <property type="match status" value="1"/>
</dbReference>
<gene>
    <name type="primary">NUDT1</name>
    <name evidence="29" type="synonym">MTH1</name>
</gene>
<reference key="1">
    <citation type="journal article" date="1993" name="J. Biol. Chem.">
        <title>Cloning and expression of cDNA for a human enzyme that hydrolyzes 8-oxo-dGTP, a mutagenic substrate for DNA synthesis.</title>
        <authorList>
            <person name="Sakumi K."/>
            <person name="Furuichi M."/>
            <person name="Tsuzuki T."/>
            <person name="Kakuma T."/>
            <person name="Kawabata S."/>
            <person name="Maki H."/>
            <person name="Sekiguchi M."/>
        </authorList>
    </citation>
    <scope>NUCLEOTIDE SEQUENCE [MRNA] (ISOFORM P18)</scope>
    <scope>PARTIAL PROTEIN SEQUENCE</scope>
    <scope>CATALYTIC ACTIVITY</scope>
    <scope>FUNCTION</scope>
</reference>
<reference key="2">
    <citation type="journal article" date="1994" name="Genomics">
        <title>Genomic structure and chromosome location of the human mutT homologue gene MTH1 encoding 8-oxo-dGTPase for prevention of A:T to C:G transversion.</title>
        <authorList>
            <person name="Furuichi M."/>
            <person name="Yoshida M.C."/>
            <person name="Oda H."/>
            <person name="Tajiri T."/>
            <person name="Nakabeppu Y."/>
            <person name="Tsuzuki T."/>
            <person name="Sekiguchi M."/>
        </authorList>
    </citation>
    <scope>NUCLEOTIDE SEQUENCE [GENOMIC DNA]</scope>
    <scope>FUNCTION</scope>
</reference>
<reference key="3">
    <citation type="journal article" date="1997" name="J. Biol. Chem.">
        <title>Regulation of expression of the human MTH1 gene encoding 8-oxo-dGTPase. Alternative splicing of transcription products.</title>
        <authorList>
            <person name="Oda H."/>
            <person name="Nakabeppu Y."/>
            <person name="Furuichi M."/>
            <person name="Sekiguchi M."/>
        </authorList>
    </citation>
    <scope>NUCLEOTIDE SEQUENCE [MRNA] (ISOFORM P18)</scope>
    <scope>TISSUE SPECIFICITY</scope>
    <scope>DEVELOPMENTAL STAGE</scope>
    <scope>VARIANT MET-83</scope>
</reference>
<reference key="4">
    <citation type="journal article" date="1999" name="Nucleic Acids Res.">
        <title>Multi-forms of human MTH1 polypeptides produced by alternative translation initiation and single nucleotide polymorphism.</title>
        <authorList>
            <person name="Oda H."/>
            <person name="Taketomi A."/>
            <person name="Maruyama R."/>
            <person name="Itoh R."/>
            <person name="Nishioka K."/>
            <person name="Yakushiji H."/>
            <person name="Suzuki T."/>
            <person name="Sekiguchi M."/>
            <person name="Nakabeppu Y."/>
        </authorList>
    </citation>
    <scope>NUCLEOTIDE SEQUENCE [MRNA] (ISOFORMS P18/P21/P22/P26)</scope>
    <scope>ALTERNATIVE INITIATION</scope>
    <scope>POLYMORPHISM</scope>
</reference>
<reference key="5">
    <citation type="submission" date="2005-10" db="EMBL/GenBank/DDBJ databases">
        <authorList>
            <consortium name="NIEHS SNPs program"/>
        </authorList>
    </citation>
    <scope>NUCLEOTIDE SEQUENCE [GENOMIC DNA]</scope>
</reference>
<reference key="6">
    <citation type="journal article" date="2003" name="Science">
        <title>Human chromosome 7: DNA sequence and biology.</title>
        <authorList>
            <person name="Scherer S.W."/>
            <person name="Cheung J."/>
            <person name="MacDonald J.R."/>
            <person name="Osborne L.R."/>
            <person name="Nakabayashi K."/>
            <person name="Herbrick J.-A."/>
            <person name="Carson A.R."/>
            <person name="Parker-Katiraee L."/>
            <person name="Skaug J."/>
            <person name="Khaja R."/>
            <person name="Zhang J."/>
            <person name="Hudek A.K."/>
            <person name="Li M."/>
            <person name="Haddad M."/>
            <person name="Duggan G.E."/>
            <person name="Fernandez B.A."/>
            <person name="Kanematsu E."/>
            <person name="Gentles S."/>
            <person name="Christopoulos C.C."/>
            <person name="Choufani S."/>
            <person name="Kwasnicka D."/>
            <person name="Zheng X.H."/>
            <person name="Lai Z."/>
            <person name="Nusskern D.R."/>
            <person name="Zhang Q."/>
            <person name="Gu Z."/>
            <person name="Lu F."/>
            <person name="Zeesman S."/>
            <person name="Nowaczyk M.J."/>
            <person name="Teshima I."/>
            <person name="Chitayat D."/>
            <person name="Shuman C."/>
            <person name="Weksberg R."/>
            <person name="Zackai E.H."/>
            <person name="Grebe T.A."/>
            <person name="Cox S.R."/>
            <person name="Kirkpatrick S.J."/>
            <person name="Rahman N."/>
            <person name="Friedman J.M."/>
            <person name="Heng H.H.Q."/>
            <person name="Pelicci P.G."/>
            <person name="Lo-Coco F."/>
            <person name="Belloni E."/>
            <person name="Shaffer L.G."/>
            <person name="Pober B."/>
            <person name="Morton C.C."/>
            <person name="Gusella J.F."/>
            <person name="Bruns G.A.P."/>
            <person name="Korf B.R."/>
            <person name="Quade B.J."/>
            <person name="Ligon A.H."/>
            <person name="Ferguson H."/>
            <person name="Higgins A.W."/>
            <person name="Leach N.T."/>
            <person name="Herrick S.R."/>
            <person name="Lemyre E."/>
            <person name="Farra C.G."/>
            <person name="Kim H.-G."/>
            <person name="Summers A.M."/>
            <person name="Gripp K.W."/>
            <person name="Roberts W."/>
            <person name="Szatmari P."/>
            <person name="Winsor E.J.T."/>
            <person name="Grzeschik K.-H."/>
            <person name="Teebi A."/>
            <person name="Minassian B.A."/>
            <person name="Kere J."/>
            <person name="Armengol L."/>
            <person name="Pujana M.A."/>
            <person name="Estivill X."/>
            <person name="Wilson M.D."/>
            <person name="Koop B.F."/>
            <person name="Tosi S."/>
            <person name="Moore G.E."/>
            <person name="Boright A.P."/>
            <person name="Zlotorynski E."/>
            <person name="Kerem B."/>
            <person name="Kroisel P.M."/>
            <person name="Petek E."/>
            <person name="Oscier D.G."/>
            <person name="Mould S.J."/>
            <person name="Doehner H."/>
            <person name="Doehner K."/>
            <person name="Rommens J.M."/>
            <person name="Vincent J.B."/>
            <person name="Venter J.C."/>
            <person name="Li P.W."/>
            <person name="Mural R.J."/>
            <person name="Adams M.D."/>
            <person name="Tsui L.-C."/>
        </authorList>
    </citation>
    <scope>NUCLEOTIDE SEQUENCE [LARGE SCALE GENOMIC DNA]</scope>
</reference>
<reference key="7">
    <citation type="submission" date="2004-05" db="EMBL/GenBank/DDBJ databases">
        <title>Cloning of human full open reading frames in Gateway(TM) system entry vector (pDONR201).</title>
        <authorList>
            <person name="Ebert L."/>
            <person name="Schick M."/>
            <person name="Neubert P."/>
            <person name="Schatten R."/>
            <person name="Henze S."/>
            <person name="Korn B."/>
        </authorList>
    </citation>
    <scope>NUCLEOTIDE SEQUENCE [LARGE SCALE MRNA] (ISOFORM P18)</scope>
</reference>
<reference key="8">
    <citation type="submission" date="2005-07" db="EMBL/GenBank/DDBJ databases">
        <authorList>
            <person name="Mural R.J."/>
            <person name="Istrail S."/>
            <person name="Sutton G.G."/>
            <person name="Florea L."/>
            <person name="Halpern A.L."/>
            <person name="Mobarry C.M."/>
            <person name="Lippert R."/>
            <person name="Walenz B."/>
            <person name="Shatkay H."/>
            <person name="Dew I."/>
            <person name="Miller J.R."/>
            <person name="Flanigan M.J."/>
            <person name="Edwards N.J."/>
            <person name="Bolanos R."/>
            <person name="Fasulo D."/>
            <person name="Halldorsson B.V."/>
            <person name="Hannenhalli S."/>
            <person name="Turner R."/>
            <person name="Yooseph S."/>
            <person name="Lu F."/>
            <person name="Nusskern D.R."/>
            <person name="Shue B.C."/>
            <person name="Zheng X.H."/>
            <person name="Zhong F."/>
            <person name="Delcher A.L."/>
            <person name="Huson D.H."/>
            <person name="Kravitz S.A."/>
            <person name="Mouchard L."/>
            <person name="Reinert K."/>
            <person name="Remington K.A."/>
            <person name="Clark A.G."/>
            <person name="Waterman M.S."/>
            <person name="Eichler E.E."/>
            <person name="Adams M.D."/>
            <person name="Hunkapiller M.W."/>
            <person name="Myers E.W."/>
            <person name="Venter J.C."/>
        </authorList>
    </citation>
    <scope>NUCLEOTIDE SEQUENCE [LARGE SCALE GENOMIC DNA]</scope>
</reference>
<reference key="9">
    <citation type="journal article" date="2003" name="Nature">
        <title>The DNA sequence of human chromosome 7.</title>
        <authorList>
            <person name="Hillier L.W."/>
            <person name="Fulton R.S."/>
            <person name="Fulton L.A."/>
            <person name="Graves T.A."/>
            <person name="Pepin K.H."/>
            <person name="Wagner-McPherson C."/>
            <person name="Layman D."/>
            <person name="Maas J."/>
            <person name="Jaeger S."/>
            <person name="Walker R."/>
            <person name="Wylie K."/>
            <person name="Sekhon M."/>
            <person name="Becker M.C."/>
            <person name="O'Laughlin M.D."/>
            <person name="Schaller M.E."/>
            <person name="Fewell G.A."/>
            <person name="Delehaunty K.D."/>
            <person name="Miner T.L."/>
            <person name="Nash W.E."/>
            <person name="Cordes M."/>
            <person name="Du H."/>
            <person name="Sun H."/>
            <person name="Edwards J."/>
            <person name="Bradshaw-Cordum H."/>
            <person name="Ali J."/>
            <person name="Andrews S."/>
            <person name="Isak A."/>
            <person name="Vanbrunt A."/>
            <person name="Nguyen C."/>
            <person name="Du F."/>
            <person name="Lamar B."/>
            <person name="Courtney L."/>
            <person name="Kalicki J."/>
            <person name="Ozersky P."/>
            <person name="Bielicki L."/>
            <person name="Scott K."/>
            <person name="Holmes A."/>
            <person name="Harkins R."/>
            <person name="Harris A."/>
            <person name="Strong C.M."/>
            <person name="Hou S."/>
            <person name="Tomlinson C."/>
            <person name="Dauphin-Kohlberg S."/>
            <person name="Kozlowicz-Reilly A."/>
            <person name="Leonard S."/>
            <person name="Rohlfing T."/>
            <person name="Rock S.M."/>
            <person name="Tin-Wollam A.-M."/>
            <person name="Abbott A."/>
            <person name="Minx P."/>
            <person name="Maupin R."/>
            <person name="Strowmatt C."/>
            <person name="Latreille P."/>
            <person name="Miller N."/>
            <person name="Johnson D."/>
            <person name="Murray J."/>
            <person name="Woessner J.P."/>
            <person name="Wendl M.C."/>
            <person name="Yang S.-P."/>
            <person name="Schultz B.R."/>
            <person name="Wallis J.W."/>
            <person name="Spieth J."/>
            <person name="Bieri T.A."/>
            <person name="Nelson J.O."/>
            <person name="Berkowicz N."/>
            <person name="Wohldmann P.E."/>
            <person name="Cook L.L."/>
            <person name="Hickenbotham M.T."/>
            <person name="Eldred J."/>
            <person name="Williams D."/>
            <person name="Bedell J.A."/>
            <person name="Mardis E.R."/>
            <person name="Clifton S.W."/>
            <person name="Chissoe S.L."/>
            <person name="Marra M.A."/>
            <person name="Raymond C."/>
            <person name="Haugen E."/>
            <person name="Gillett W."/>
            <person name="Zhou Y."/>
            <person name="James R."/>
            <person name="Phelps K."/>
            <person name="Iadanoto S."/>
            <person name="Bubb K."/>
            <person name="Simms E."/>
            <person name="Levy R."/>
            <person name="Clendenning J."/>
            <person name="Kaul R."/>
            <person name="Kent W.J."/>
            <person name="Furey T.S."/>
            <person name="Baertsch R.A."/>
            <person name="Brent M.R."/>
            <person name="Keibler E."/>
            <person name="Flicek P."/>
            <person name="Bork P."/>
            <person name="Suyama M."/>
            <person name="Bailey J.A."/>
            <person name="Portnoy M.E."/>
            <person name="Torrents D."/>
            <person name="Chinwalla A.T."/>
            <person name="Gish W.R."/>
            <person name="Eddy S.R."/>
            <person name="McPherson J.D."/>
            <person name="Olson M.V."/>
            <person name="Eichler E.E."/>
            <person name="Green E.D."/>
            <person name="Waterston R.H."/>
            <person name="Wilson R.K."/>
        </authorList>
    </citation>
    <scope>NUCLEOTIDE SEQUENCE [LARGE SCALE GENOMIC DNA]</scope>
</reference>
<reference key="10">
    <citation type="journal article" date="2004" name="Genome Res.">
        <title>The status, quality, and expansion of the NIH full-length cDNA project: the Mammalian Gene Collection (MGC).</title>
        <authorList>
            <consortium name="The MGC Project Team"/>
        </authorList>
    </citation>
    <scope>NUCLEOTIDE SEQUENCE [LARGE SCALE MRNA] (ISOFORMS P18 AND P22)</scope>
    <scope>VARIANT MET-83</scope>
    <source>
        <tissue>Bone</tissue>
        <tissue>Lymph</tissue>
        <tissue>Mammary gland</tissue>
        <tissue>Muscle</tissue>
    </source>
</reference>
<reference key="11">
    <citation type="journal article" date="1995" name="J. Biol. Chem.">
        <title>Intracellular localization of 8-oxo-dGTPase in human cells, with special reference to the role of the enzyme in mitochondria.</title>
        <authorList>
            <person name="Kang D."/>
            <person name="Nishida J."/>
            <person name="Iyama A."/>
            <person name="Nakabeppu Y."/>
            <person name="Furuichi M."/>
            <person name="Fujiwara T."/>
            <person name="Sekiguchi M."/>
            <person name="Takeshige K."/>
        </authorList>
    </citation>
    <scope>SUBCELLULAR LOCATION (ISOFORM P18)</scope>
    <scope>CATALYTIC ACTIVITY</scope>
</reference>
<reference key="12">
    <citation type="journal article" date="1999" name="J. Biol. Chem.">
        <title>The oxidized forms of dATP are substrates for the human MutT homologue, the hMTH1 protein.</title>
        <authorList>
            <person name="Fujikawa K."/>
            <person name="Kamiya H."/>
            <person name="Yakushiji H."/>
            <person name="Fujii Y."/>
            <person name="Nakabeppu Y."/>
            <person name="Kasai H."/>
        </authorList>
    </citation>
    <scope>FUNCTION</scope>
    <scope>CATALYTIC ACTIVITY</scope>
    <scope>ACTIVITY REGULATION</scope>
    <scope>BIOPHYSICOCHEMICAL PROPERTIES</scope>
    <scope>SUBSTRATE SPECIFICITY</scope>
</reference>
<reference key="13">
    <citation type="journal article" date="1999" name="J. Biol. Chem.">
        <title>Functional significance of the conserved residues for the 23-residue module among MTH1 and MutT family proteins.</title>
        <authorList>
            <person name="Fujii Y."/>
            <person name="Shimokawa H."/>
            <person name="Sekiguchi M."/>
            <person name="Nakabeppu Y."/>
        </authorList>
    </citation>
    <scope>FUNCTION</scope>
    <scope>CATALYTIC ACTIVITY</scope>
    <scope>MUTAGENESIS OF GLY-36; GLY-37; VAL-39; GLN-40; GLY-42; ILE-45; ASP-47; GLY-48; ALA-49; LEU-53; GLN-54; GLU-55; GLU-56 AND SER-57</scope>
</reference>
<reference key="14">
    <citation type="journal article" date="2001" name="Nucleic Acids Res.">
        <title>Human MTH1 protein hydrolyzes the oxidized ribonucleotide, 2-hydroxy-ATP.</title>
        <authorList>
            <person name="Fujikawa K."/>
            <person name="Kamiya H."/>
            <person name="Yakushiji H."/>
            <person name="Nakabeppu Y."/>
            <person name="Kasai H."/>
        </authorList>
    </citation>
    <scope>FUNCTION</scope>
    <scope>CATALYTIC ACTIVITY</scope>
    <scope>BIOPHYSICOCHEMICAL PROPERTIES</scope>
    <scope>SUBSTRATE SPECIFICITY</scope>
</reference>
<reference key="15">
    <citation type="journal article" date="2002" name="J. Biol. Chem.">
        <title>A molecular basis for the selective recognition of 2-hydroxy-dATP and 8-oxo-dGTP by human MTH1.</title>
        <authorList>
            <person name="Sakai Y."/>
            <person name="Furuichi M."/>
            <person name="Takahashi M."/>
            <person name="Mishima M."/>
            <person name="Iwai S."/>
            <person name="Shirakawa M."/>
            <person name="Nakabeppu Y."/>
        </authorList>
    </citation>
    <scope>FUNCTION</scope>
    <scope>CATALYTIC ACTIVITY</scope>
    <scope>MUTAGENESIS OF PHE-27; TRP-117; ASP-119; LEU-150; ARG-151; GLU-152; VAL-153; ASP-154; THR-155; VAL-156; 151-ARG--VAL-156; 152-GLU--VAL-156; 153-VAL--VAL-156 AND 154-ASP--VAL-156</scope>
    <scope>REGION</scope>
</reference>
<reference key="16">
    <citation type="journal article" date="2003" name="J. Biol. Chem.">
        <title>An oxidized purine nucleoside triphosphatase, MTH1, suppresses cell death caused by oxidative stress.</title>
        <authorList>
            <person name="Yoshimura D."/>
            <person name="Sakumi K."/>
            <person name="Ohno M."/>
            <person name="Sakai Y."/>
            <person name="Furuichi M."/>
            <person name="Iwai S."/>
            <person name="Nakabeppu Y."/>
        </authorList>
    </citation>
    <scope>FUNCTION</scope>
    <scope>CATALYTIC ACTIVITY</scope>
    <scope>SUBCELLULAR LOCATION (ISOFORM P18)</scope>
</reference>
<reference key="17">
    <citation type="journal article" date="2006" name="J. Mol. Med.">
        <title>The GT to GC single nucleotide polymorphism at the beginning of an alternative exon 2C of human MTH1 gene confers an amino terminal extension that functions as a mitochondrial targeting signal.</title>
        <authorList>
            <person name="Sakai Y."/>
            <person name="Oda H."/>
            <person name="Yoshimura D."/>
            <person name="Furuichi M."/>
            <person name="Kang D."/>
            <person name="Iwai S."/>
            <person name="Hara T."/>
            <person name="Nakabeppu Y."/>
        </authorList>
    </citation>
    <scope>FUNCTION</scope>
    <scope>CATALYTIC ACTIVITY</scope>
    <scope>SUBCELLULAR LOCATION (ISOFORM P26)</scope>
    <scope>ALTERNATIVE SPLICING</scope>
    <scope>CHARACTERIZATION OF VARIANT MET-83</scope>
</reference>
<reference key="18">
    <citation type="journal article" date="2011" name="BMC Syst. Biol.">
        <title>Initial characterization of the human central proteome.</title>
        <authorList>
            <person name="Burkard T.R."/>
            <person name="Planyavsky M."/>
            <person name="Kaupe I."/>
            <person name="Breitwieser F.P."/>
            <person name="Buerckstuemmer T."/>
            <person name="Bennett K.L."/>
            <person name="Superti-Furga G."/>
            <person name="Colinge J."/>
        </authorList>
    </citation>
    <scope>IDENTIFICATION BY MASS SPECTROMETRY [LARGE SCALE ANALYSIS]</scope>
</reference>
<reference key="19">
    <citation type="journal article" date="2012" name="J. Biol. Chem.">
        <title>Human MTH3 (NUDT18) protein hydrolyzes oxidized forms of guanosine and deoxyguanosine diphosphates: comparison with MTH1 and MTH2.</title>
        <authorList>
            <person name="Takagi Y."/>
            <person name="Setoyama D."/>
            <person name="Ito R."/>
            <person name="Kamiya H."/>
            <person name="Yamagata Y."/>
            <person name="Sekiguchi M."/>
        </authorList>
    </citation>
    <scope>FUNCTION</scope>
    <scope>CATALYTIC ACTIVITY</scope>
</reference>
<reference key="20">
    <citation type="journal article" date="2015" name="Nat. Commun.">
        <title>Crystal structure, biochemical and cellular activities demonstrate separate functions of MTH1 and MTH2.</title>
        <authorList>
            <person name="Carter M."/>
            <person name="Jemth A.S."/>
            <person name="Hagenkort A."/>
            <person name="Page B.D."/>
            <person name="Gustafsson R."/>
            <person name="Griese J.J."/>
            <person name="Gad H."/>
            <person name="Valerie N.C."/>
            <person name="Desroses M."/>
            <person name="Bostrom J."/>
            <person name="Warpman Berglund U."/>
            <person name="Helleday T."/>
            <person name="Stenmark P."/>
        </authorList>
    </citation>
    <scope>FUNCTION</scope>
</reference>
<reference evidence="38" key="21">
    <citation type="journal article" date="2004" name="J. Biol. Chem.">
        <title>Structure of human MTH1, a Nudix family hydrolase that selectively degrades oxidized purine nucleoside triphosphates.</title>
        <authorList>
            <person name="Mishima M."/>
            <person name="Sakai Y."/>
            <person name="Itoh N."/>
            <person name="Kamiya H."/>
            <person name="Furuichi M."/>
            <person name="Takahashi M."/>
            <person name="Yamagata Y."/>
            <person name="Iwai S."/>
            <person name="Nakabeppu Y."/>
            <person name="Shirakawa M."/>
        </authorList>
    </citation>
    <scope>STRUCTURE BY NMR</scope>
    <scope>SUBUNIT</scope>
    <scope>COFACTOR</scope>
</reference>
<reference key="22">
    <citation type="journal article" date="2006" name="Acta Crystallogr. F">
        <title>Crystallization and preliminary X-ray analysis of human MTH1 complexed with two oxidized nucleotides, 8-oxo-dGMP and 2-oxo-dATP.</title>
        <authorList>
            <person name="Nakamura T."/>
            <person name="Kitaguchi Y."/>
            <person name="Miyazawa M."/>
            <person name="Kamiya H."/>
            <person name="Toma S."/>
            <person name="Ikemizu S."/>
            <person name="Shirakawa M."/>
            <person name="Nakabeppu Y."/>
            <person name="Yamagata Y."/>
        </authorList>
    </citation>
    <scope>CRYSTALLIZATION</scope>
    <scope>PRELIMINARY X-RAY CRYSTALLOGRAPHY (1.95 ANGSTROMS)</scope>
</reference>
<reference evidence="39 40" key="23">
    <citation type="journal article" date="2011" name="FEBS Lett.">
        <title>Crystal structure of human MTH1 and the 8-oxo-dGMP product complex.</title>
        <authorList>
            <person name="Svensson L.M."/>
            <person name="Jemth A.S."/>
            <person name="Desroses M."/>
            <person name="Loseva O."/>
            <person name="Helleday T."/>
            <person name="Hogbom M."/>
            <person name="Stenmark P."/>
        </authorList>
    </citation>
    <scope>X-RAY CRYSTALLOGRAPHY (1.80 ANGSTROMS) IN COMPLEX WITH 8-OXO-DGMP</scope>
    <scope>CATALYTIC ACTIVITY</scope>
    <scope>BIOPHYSICOCHEMICAL PROPERTIES</scope>
</reference>
<reference key="24">
    <citation type="submission" date="2011-01" db="PDB data bank">
        <title>Crystal Structure of Human 8-oxo-dGTPase (MTH1).</title>
        <authorList>
            <consortium name="Structural genomics consortium (SGC)"/>
            <person name="Tresaugues L."/>
            <person name="Siponen M.I."/>
            <person name="Arrowsmith C.H."/>
            <person name="Berglund H."/>
            <person name="Bountra C."/>
            <person name="Collins R."/>
            <person name="Edwards A.M."/>
            <person name="Ekblad T."/>
            <person name="Flodin S."/>
            <person name="Flores A."/>
            <person name="Graslund S."/>
            <person name="Hammarstrom M."/>
            <person name="Johansson I."/>
            <person name="Karlberg T."/>
            <person name="Kol S."/>
            <person name="Kotenyova T."/>
            <person name="Kouznetsova E."/>
            <person name="Moche M."/>
            <person name="Nyman T."/>
            <person name="Persson C."/>
            <person name="Schuler H."/>
            <person name="Schutz P."/>
            <person name="Thorsell A.G."/>
            <person name="Van Der Berg S."/>
            <person name="Wahlberg E."/>
            <person name="Weigelt J."/>
            <person name="Welin M."/>
            <person name="Nordlund P."/>
        </authorList>
    </citation>
    <scope>X-RAY CRYSTALLOGRAPHY (1.80 ANGSTROMS)</scope>
</reference>
<reference evidence="43 44" key="25">
    <citation type="journal article" date="2014" name="Nature">
        <title>MTH1 inhibition eradicates cancer by preventing sanitation of the dNTP pool.</title>
        <authorList>
            <person name="Gad H."/>
            <person name="Koolmeister T."/>
            <person name="Jemth A.S."/>
            <person name="Eshtad S."/>
            <person name="Jacques S.A."/>
            <person name="Strom C.E."/>
            <person name="Svensson L.M."/>
            <person name="Schultz N."/>
            <person name="Lundback T."/>
            <person name="Einarsdottir B.O."/>
            <person name="Saleh A."/>
            <person name="Gokturk C."/>
            <person name="Baranczewski P."/>
            <person name="Svensson R."/>
            <person name="Berntsson R.P."/>
            <person name="Gustafsson R."/>
            <person name="Stromberg K."/>
            <person name="Sanjiv K."/>
            <person name="Jacques-Cordonnier M.C."/>
            <person name="Desroses M."/>
            <person name="Gustavsson A.L."/>
            <person name="Olofsson R."/>
            <person name="Johansson F."/>
            <person name="Homan E.J."/>
            <person name="Loseva O."/>
            <person name="Brautigam L."/>
            <person name="Johansson L."/>
            <person name="Hoglund A."/>
            <person name="Hagenkort A."/>
            <person name="Pham T."/>
            <person name="Altun M."/>
            <person name="Gaugaz F.Z."/>
            <person name="Vikingsson S."/>
            <person name="Evers B."/>
            <person name="Henriksson M."/>
            <person name="Vallin K.S."/>
            <person name="Wallner O.A."/>
            <person name="Hammarstrom L.G."/>
            <person name="Wiita E."/>
            <person name="Almlof I."/>
            <person name="Kalderen C."/>
            <person name="Axelsson H."/>
            <person name="Djureinovic T."/>
            <person name="Puigvert J.C."/>
            <person name="Haggblad M."/>
            <person name="Jeppsson F."/>
            <person name="Martens U."/>
            <person name="Lundin C."/>
            <person name="Lundgren B."/>
            <person name="Granelli I."/>
            <person name="Jensen A.J."/>
            <person name="Artursson P."/>
            <person name="Nilsson J.A."/>
            <person name="Stenmark P."/>
            <person name="Scobie M."/>
            <person name="Berglund U.W."/>
            <person name="Helleday T."/>
        </authorList>
    </citation>
    <scope>X-RAY CRYSTALLOGRAPHY (1.60 ANGSTROMS) IN COMPLEX WITH SYNTHETIC INHIBITORS</scope>
    <scope>FUNCTION</scope>
    <scope>CATALYTIC ACTIVITY</scope>
    <scope>MUTAGENESIS OF GLU-56</scope>
</reference>
<reference evidence="41 42" key="26">
    <citation type="journal article" date="2014" name="Nature">
        <title>Stereospecific targeting of MTH1 by (S)-crizotinib as an anticancer strategy.</title>
        <authorList>
            <person name="Huber K.V."/>
            <person name="Salah E."/>
            <person name="Radic B."/>
            <person name="Gridling M."/>
            <person name="Elkins J.M."/>
            <person name="Stukalov A."/>
            <person name="Jemth A.S."/>
            <person name="Gokturk C."/>
            <person name="Sanjiv K."/>
            <person name="Stromberg K."/>
            <person name="Pham T."/>
            <person name="Berglund U.W."/>
            <person name="Colinge J."/>
            <person name="Bennett K.L."/>
            <person name="Loizou J.I."/>
            <person name="Helleday T."/>
            <person name="Knapp S."/>
            <person name="Superti-Furga G."/>
        </authorList>
    </citation>
    <scope>X-RAY CRYSTALLOGRAPHY (1.20 ANGSTROMS) IN COMPLEX WITH SYNTHETIC INHIBITORS</scope>
    <scope>FUNCTION</scope>
    <scope>CATALYTIC ACTIVITY</scope>
</reference>
<reference evidence="45 46 47 48 49 50" key="27">
    <citation type="journal article" date="2016" name="PLoS ONE">
        <title>MTH1 Substrate Recognition--An Example of Specific Promiscuity.</title>
        <authorList>
            <person name="Nissink J.W."/>
            <person name="Bista M."/>
            <person name="Breed J."/>
            <person name="Carter N."/>
            <person name="Embrey K."/>
            <person name="Read J."/>
            <person name="Winter-Holt J.J."/>
        </authorList>
    </citation>
    <scope>X-RAY CRYSTALLOGRAPHY (1.24 ANGSTROMS) IN COMPLEX WITH 8-OXO-DGTP; 8-OXO-ATP AND SUBSTRATE ANALOGS</scope>
    <scope>CATALYTIC ACTIVITY</scope>
    <scope>FUNCTION</scope>
</reference>
<reference evidence="58" key="28">
    <citation type="journal article" date="2017" name="ACS Chem. Biol.">
        <title>Novel Class of Potent and Cellularly Active Inhibitors Devalidates MTH1 as Broad-Spectrum Cancer Target.</title>
        <authorList>
            <person name="Ellermann M."/>
            <person name="Eheim A."/>
            <person name="Rahm F."/>
            <person name="Viklund J."/>
            <person name="Guenther J."/>
            <person name="Andersson M."/>
            <person name="Ericsson U."/>
            <person name="Forsblom R."/>
            <person name="Ginman T."/>
            <person name="Lindstrom J."/>
            <person name="Silvander C."/>
            <person name="Tresaugues L."/>
            <person name="Giese A."/>
            <person name="Bunse S."/>
            <person name="Neuhaus R."/>
            <person name="Weiske J."/>
            <person name="Quanz M."/>
            <person name="Glasauer A."/>
            <person name="Nowak-Reppel K."/>
            <person name="Bader B."/>
            <person name="Irlbacher H."/>
            <person name="Meyer H."/>
            <person name="Queisser N."/>
            <person name="Bauser M."/>
            <person name="Haegebarth A."/>
            <person name="Gorjanacz M."/>
        </authorList>
    </citation>
    <scope>X-RAY CRYSTALLOGRAPHY (1.72 ANGSTROMS)</scope>
    <scope>FUNCTION</scope>
</reference>
<reference evidence="51 52 53 54 55 56 57 60" key="29">
    <citation type="journal article" date="2017" name="J. Biol. Chem.">
        <title>Structural and Kinetic Studies of the Human Nudix Hydrolase MTH1 Reveal the Mechanism for Its Broad Substrate Specificity.</title>
        <authorList>
            <person name="Waz S."/>
            <person name="Nakamura T."/>
            <person name="Hirata K."/>
            <person name="Koga-Ogawa Y."/>
            <person name="Chirifu M."/>
            <person name="Arimori T."/>
            <person name="Tamada T."/>
            <person name="Ikemizu S."/>
            <person name="Nakabeppu Y."/>
            <person name="Yamagata Y."/>
        </authorList>
    </citation>
    <scope>X-RAY CRYSTALLOGRAPHY (1.00 ANGSTROMS) IN COMPLEXES WITH 8-OXO-DGTP AND 2-OXO-DATP</scope>
    <scope>CATALYTIC ACTIVITY</scope>
    <scope>FUNCTION</scope>
    <scope>MUTAGENESIS OF ASP-120</scope>
</reference>
<reference evidence="59" key="30">
    <citation type="journal article" date="2018" name="Nucleic Acids Res.">
        <title>MutT homologue 1 (MTH1) catalyzes the hydrolysis of mutagenic O6-methyl-dGTP.</title>
        <authorList>
            <person name="Jemth A.S."/>
            <person name="Gustafsson R."/>
            <person name="Braeutigam L."/>
            <person name="Henriksson L."/>
            <person name="Vallin K.S.A."/>
            <person name="Sarno A."/>
            <person name="Almloef I."/>
            <person name="Homan E."/>
            <person name="Rasti A."/>
            <person name="Warpman Berglund U."/>
            <person name="Stenmark P."/>
            <person name="Helleday T."/>
        </authorList>
    </citation>
    <scope>X-RAY CRYSTALLOGRAPHY (1.80 ANGSTROMS) IN COMPLEX WITH O(6)-METHYL-DGMP</scope>
    <scope>FUNCTION</scope>
    <scope>CATALYTIC ACTIVITY</scope>
    <scope>BIOPHYSICOCHEMICAL PROPERTIES</scope>
    <scope>SUBSTRATE SPECIFICITY</scope>
    <scope>REGION</scope>
</reference>
<reference evidence="61" key="31">
    <citation type="journal article" date="2020" name="J. Biol. Chem.">
        <title>MutT homologue 1 (MTH1) removes N6-methyl-dATP from the dNTP pool.</title>
        <authorList>
            <person name="Scaletti E.R."/>
            <person name="Vallin K.S."/>
            <person name="Braeutigam L."/>
            <person name="Sarno A."/>
            <person name="Warpman Berglund U."/>
            <person name="Helleday T."/>
            <person name="Stenmark P."/>
            <person name="Jemth A.S."/>
        </authorList>
    </citation>
    <scope>X-RAY CRYSTALLOGRAPHY (2.45 ANGSTROMS) IN COMPLEX WITH N(6)-METHYL-AMP</scope>
    <scope>FUNCTION</scope>
    <scope>CATALYTIC ACTIVITY</scope>
    <scope>BIOPHYSICOCHEMICAL PROPERTIES</scope>
</reference>
<reference key="32">
    <citation type="journal article" date="2004" name="Endocr. J.">
        <title>Association study of human MTH1 gene polymorphisms with type 1 diabetes mellitus.</title>
        <authorList>
            <person name="Miyako K."/>
            <person name="Kohno H."/>
            <person name="Ihara K."/>
            <person name="Kuromaru R."/>
            <person name="Matsuura N."/>
            <person name="Hara T."/>
        </authorList>
    </citation>
    <scope>VARIANT MET-83</scope>
</reference>
<reference key="33">
    <citation type="journal article" date="2006" name="Carcinogenesis">
        <title>Association of polymorphisms in the MTH1 gene with small cell lung carcinoma risk.</title>
        <authorList>
            <person name="Kohno T."/>
            <person name="Sakiyama T."/>
            <person name="Kunitoh H."/>
            <person name="Goto K."/>
            <person name="Nishiwaki Y."/>
            <person name="Saito D."/>
            <person name="Hirose H."/>
            <person name="Eguchi T."/>
            <person name="Yanagitani N."/>
            <person name="Saito R."/>
            <person name="Sasaki-Matsumura R."/>
            <person name="Mimaki S."/>
            <person name="Toyama K."/>
            <person name="Yamamoto S."/>
            <person name="Kuchiba A."/>
            <person name="Sobue T."/>
            <person name="Ohta T."/>
            <person name="Ohki M."/>
            <person name="Yokota J."/>
        </authorList>
    </citation>
    <scope>VARIANT MET-83</scope>
</reference>
<feature type="chain" id="PRO_0000019944" description="Oxidized purine nucleoside triphosphate hydrolase">
    <location>
        <begin position="1"/>
        <end position="156"/>
    </location>
</feature>
<feature type="domain" description="Nudix hydrolase" evidence="3">
    <location>
        <begin position="3"/>
        <end position="132"/>
    </location>
</feature>
<feature type="short sequence motif" description="Nudix box" evidence="3">
    <location>
        <begin position="37"/>
        <end position="58"/>
    </location>
</feature>
<feature type="binding site" evidence="21 52 54 57 60">
    <location>
        <position position="8"/>
    </location>
    <ligand>
        <name>2-oxo-dATP</name>
        <dbReference type="ChEBI" id="CHEBI:77897"/>
    </ligand>
</feature>
<feature type="binding site" evidence="15 39">
    <location>
        <position position="8"/>
    </location>
    <ligand>
        <name>8-oxo-dGMP</name>
        <dbReference type="ChEBI" id="CHEBI:63224"/>
    </ligand>
</feature>
<feature type="binding site" evidence="20 21 45 51">
    <location>
        <position position="8"/>
    </location>
    <ligand>
        <name>8-oxo-dGTP</name>
        <dbReference type="ChEBI" id="CHEBI:77896"/>
    </ligand>
</feature>
<feature type="binding site" evidence="24 61">
    <location>
        <position position="8"/>
    </location>
    <ligand>
        <name>N(6)-methyl-AMP</name>
        <dbReference type="ChEBI" id="CHEBI:144842"/>
    </ligand>
</feature>
<feature type="binding site" evidence="23 59">
    <location>
        <position position="8"/>
    </location>
    <ligand>
        <name>O(6)-methyl-dGMP</name>
        <dbReference type="ChEBI" id="CHEBI:169975"/>
    </ligand>
</feature>
<feature type="binding site" evidence="15 39">
    <location>
        <position position="23"/>
    </location>
    <ligand>
        <name>8-oxo-dGMP</name>
        <dbReference type="ChEBI" id="CHEBI:63224"/>
    </ligand>
</feature>
<feature type="binding site" evidence="21 51">
    <location>
        <position position="23"/>
    </location>
    <ligand>
        <name>8-oxo-dGTP</name>
        <dbReference type="ChEBI" id="CHEBI:77896"/>
    </ligand>
</feature>
<feature type="binding site" evidence="24 61">
    <location>
        <position position="23"/>
    </location>
    <ligand>
        <name>N(6)-methyl-AMP</name>
        <dbReference type="ChEBI" id="CHEBI:144842"/>
    </ligand>
</feature>
<feature type="binding site" evidence="23 59">
    <location>
        <position position="23"/>
    </location>
    <ligand>
        <name>O(6)-methyl-dGMP</name>
        <dbReference type="ChEBI" id="CHEBI:169975"/>
    </ligand>
</feature>
<feature type="binding site" evidence="20 46">
    <location>
        <position position="27"/>
    </location>
    <ligand>
        <name>8-oxo-ATP</name>
        <dbReference type="ChEBI" id="CHEBI:189076"/>
    </ligand>
</feature>
<feature type="binding site" evidence="21 52 57">
    <location>
        <position position="33"/>
    </location>
    <ligand>
        <name>2-oxo-dATP</name>
        <dbReference type="ChEBI" id="CHEBI:77897"/>
    </ligand>
</feature>
<feature type="binding site" evidence="15 39">
    <location>
        <position position="33"/>
    </location>
    <ligand>
        <name>8-oxo-dGMP</name>
        <dbReference type="ChEBI" id="CHEBI:63224"/>
    </ligand>
</feature>
<feature type="binding site" evidence="20 21 45 51 53 55">
    <location>
        <position position="33"/>
    </location>
    <ligand>
        <name>8-oxo-dGTP</name>
        <dbReference type="ChEBI" id="CHEBI:77896"/>
    </ligand>
</feature>
<feature type="binding site" evidence="23 59">
    <location>
        <position position="33"/>
    </location>
    <ligand>
        <name>O(6)-methyl-dGMP</name>
        <dbReference type="ChEBI" id="CHEBI:169975"/>
    </ligand>
</feature>
<feature type="binding site" evidence="21 52 54 57 60">
    <location>
        <begin position="35"/>
        <end position="38"/>
    </location>
    <ligand>
        <name>2-oxo-dATP</name>
        <dbReference type="ChEBI" id="CHEBI:77897"/>
    </ligand>
</feature>
<feature type="binding site" evidence="20 46">
    <location>
        <begin position="35"/>
        <end position="38"/>
    </location>
    <ligand>
        <name>8-oxo-ATP</name>
        <dbReference type="ChEBI" id="CHEBI:189076"/>
    </ligand>
</feature>
<feature type="binding site" evidence="20 21 45 51 53">
    <location>
        <begin position="35"/>
        <end position="38"/>
    </location>
    <ligand>
        <name>8-oxo-dGTP</name>
        <dbReference type="ChEBI" id="CHEBI:77896"/>
    </ligand>
</feature>
<feature type="binding site" evidence="1">
    <location>
        <position position="36"/>
    </location>
    <ligand>
        <name>Mg(2+)</name>
        <dbReference type="ChEBI" id="CHEBI:18420"/>
        <label>1</label>
    </ligand>
</feature>
<feature type="binding site" evidence="20 46">
    <location>
        <position position="52"/>
    </location>
    <ligand>
        <name>8-oxo-ATP</name>
        <dbReference type="ChEBI" id="CHEBI:189076"/>
    </ligand>
</feature>
<feature type="binding site" evidence="1">
    <location>
        <position position="52"/>
    </location>
    <ligand>
        <name>Mg(2+)</name>
        <dbReference type="ChEBI" id="CHEBI:18420"/>
        <label>2</label>
    </ligand>
</feature>
<feature type="binding site" evidence="1">
    <location>
        <position position="55"/>
    </location>
    <ligand>
        <name>Mg(2+)</name>
        <dbReference type="ChEBI" id="CHEBI:18420"/>
        <label>2</label>
    </ligand>
</feature>
<feature type="binding site" evidence="20 46">
    <location>
        <position position="56"/>
    </location>
    <ligand>
        <name>8-oxo-ATP</name>
        <dbReference type="ChEBI" id="CHEBI:189076"/>
    </ligand>
</feature>
<feature type="binding site" evidence="1">
    <location>
        <position position="56"/>
    </location>
    <ligand>
        <name>Mg(2+)</name>
        <dbReference type="ChEBI" id="CHEBI:18420"/>
        <label>1</label>
    </ligand>
</feature>
<feature type="binding site" evidence="1">
    <location>
        <position position="100"/>
    </location>
    <ligand>
        <name>Mg(2+)</name>
        <dbReference type="ChEBI" id="CHEBI:18420"/>
        <label>1</label>
    </ligand>
</feature>
<feature type="binding site" evidence="21 52 54 57 60">
    <location>
        <begin position="117"/>
        <end position="120"/>
    </location>
    <ligand>
        <name>2-oxo-dATP</name>
        <dbReference type="ChEBI" id="CHEBI:77897"/>
    </ligand>
</feature>
<feature type="binding site" evidence="20 46">
    <location>
        <begin position="117"/>
        <end position="120"/>
    </location>
    <ligand>
        <name>8-oxo-ATP</name>
        <dbReference type="ChEBI" id="CHEBI:189076"/>
    </ligand>
</feature>
<feature type="binding site" evidence="15 39">
    <location>
        <begin position="117"/>
        <end position="120"/>
    </location>
    <ligand>
        <name>8-oxo-dGMP</name>
        <dbReference type="ChEBI" id="CHEBI:63224"/>
    </ligand>
</feature>
<feature type="binding site" evidence="20 21 45 51 53 55">
    <location>
        <begin position="117"/>
        <end position="120"/>
    </location>
    <ligand>
        <name>8-oxo-dGTP</name>
        <dbReference type="ChEBI" id="CHEBI:77896"/>
    </ligand>
</feature>
<feature type="binding site" evidence="24 61">
    <location>
        <begin position="117"/>
        <end position="120"/>
    </location>
    <ligand>
        <name>N(6)-methyl-AMP</name>
        <dbReference type="ChEBI" id="CHEBI:144842"/>
    </ligand>
</feature>
<feature type="binding site" evidence="23 59">
    <location>
        <begin position="117"/>
        <end position="120"/>
    </location>
    <ligand>
        <name>O(6)-methyl-dGMP</name>
        <dbReference type="ChEBI" id="CHEBI:169975"/>
    </ligand>
</feature>
<feature type="splice variant" id="VSP_061188" description="In isoform p21.">
    <original>M</original>
    <variation>MGEPEGSWSGKNPGTM</variation>
    <location>
        <position position="1"/>
    </location>
</feature>
<feature type="splice variant" id="VSP_061189" description="In isoform p22.">
    <original>M</original>
    <variation>MSGISPQQMGEPEGSWSGKNPGTM</variation>
    <location>
        <position position="1"/>
    </location>
</feature>
<feature type="splice variant" id="VSP_061190" description="In isoform p26.">
    <original>M</original>
    <variation>MYWSNQITRRLGERVQGFMSGISPQQMGEPEGSWSGKNPGTM</variation>
    <location>
        <position position="1"/>
    </location>
</feature>
<feature type="sequence variant" id="VAR_068715" description="In dbSNP:rs11547459.">
    <original>G</original>
    <variation>W</variation>
    <location>
        <position position="36"/>
    </location>
</feature>
<feature type="sequence variant" id="VAR_013757" description="Decreased localization to mitochondrion; dbSNP:rs4866." evidence="11 12 13 14 28">
    <original>V</original>
    <variation>M</variation>
    <location>
        <position position="83"/>
    </location>
</feature>
<feature type="mutagenesis site" description="Reduces 2-oxo-dATPase and 8-oxo-dGTPase activities." evidence="8">
    <original>F</original>
    <variation>A</variation>
    <location>
        <position position="27"/>
    </location>
</feature>
<feature type="mutagenesis site" description="Reduces activity by 97%." evidence="6">
    <original>G</original>
    <variation>R</variation>
    <location>
        <position position="36"/>
    </location>
</feature>
<feature type="mutagenesis site" description="Loss of activity." evidence="6">
    <original>G</original>
    <variation>F</variation>
    <location>
        <position position="37"/>
    </location>
</feature>
<feature type="mutagenesis site" description="Loss of activity." evidence="6">
    <original>V</original>
    <variation>E</variation>
    <location>
        <position position="39"/>
    </location>
</feature>
<feature type="mutagenesis site" description="Reduces activity by 97%." evidence="6">
    <original>Q</original>
    <variation>P</variation>
    <location>
        <position position="40"/>
    </location>
</feature>
<feature type="mutagenesis site" description="Reduces activity by 60%." evidence="6">
    <original>G</original>
    <variation>I</variation>
    <location>
        <position position="42"/>
    </location>
</feature>
<feature type="mutagenesis site" description="Loss of activity." evidence="6">
    <original>I</original>
    <variation>K</variation>
    <location>
        <position position="45"/>
    </location>
</feature>
<feature type="mutagenesis site" description="Loss of activity." evidence="6">
    <original>D</original>
    <variation>P</variation>
    <location>
        <position position="47"/>
    </location>
</feature>
<feature type="mutagenesis site" description="Loss of activity." evidence="6">
    <original>G</original>
    <variation>M</variation>
    <location>
        <position position="48"/>
    </location>
</feature>
<feature type="mutagenesis site" description="Loss of activity." evidence="6">
    <original>A</original>
    <variation>P</variation>
    <location>
        <position position="49"/>
    </location>
</feature>
<feature type="mutagenesis site" description="Loss of activity." evidence="6">
    <original>L</original>
    <variation>P</variation>
    <location>
        <position position="53"/>
    </location>
</feature>
<feature type="mutagenesis site" description="Loss of activity." evidence="6">
    <original>Q</original>
    <variation>P</variation>
    <location>
        <position position="54"/>
    </location>
</feature>
<feature type="mutagenesis site" description="Loss of activity." evidence="6">
    <original>E</original>
    <variation>G</variation>
    <location>
        <position position="55"/>
    </location>
</feature>
<feature type="mutagenesis site" description="Loss of ability to prevent DNA damage. Expected to cause loss of enzyme activity." evidence="17">
    <original>E</original>
    <variation>A</variation>
    <location>
        <position position="56"/>
    </location>
</feature>
<feature type="mutagenesis site" description="Loss of activity." evidence="6">
    <original>E</original>
    <variation>Y</variation>
    <location>
        <position position="56"/>
    </location>
</feature>
<feature type="mutagenesis site" description="Loss of activity." evidence="6">
    <original>S</original>
    <variation>R</variation>
    <location>
        <position position="57"/>
    </location>
</feature>
<feature type="mutagenesis site" description="Greatly reduces or abolishes 2-oxo-dATPase and 8-oxo-dGTPase activities." evidence="8">
    <original>W</original>
    <variation>A</variation>
    <location>
        <position position="117"/>
    </location>
</feature>
<feature type="mutagenesis site" description="Enhances 2-oxo-dATPase activity and greatly reduces 8-oxo-dGTPase activity." evidence="8">
    <original>W</original>
    <variation>Y</variation>
    <location>
        <position position="117"/>
    </location>
</feature>
<feature type="mutagenesis site" description="Loss of 2-oxo-dATPase activity, reduces 8-oxo-dGTPase activity." evidence="8">
    <original>D</original>
    <variation>A</variation>
    <variation>N</variation>
    <location>
        <position position="119"/>
    </location>
</feature>
<feature type="mutagenesis site" description="Mildly decreased 2-oxo-dATPase activity, nearly abolishes 8-oxo-dGTPase activity." evidence="21">
    <original>D</original>
    <variation>A</variation>
    <variation>N</variation>
    <location>
        <position position="120"/>
    </location>
</feature>
<feature type="mutagenesis site" description="Reduces 2-oxo-dATPase and 8-oxo-dGTPase activities and increases thermolability." evidence="8">
    <original>L</original>
    <variation>A</variation>
    <location>
        <position position="150"/>
    </location>
</feature>
<feature type="mutagenesis site" description="Almost abolishes 2-oxo-dATPase and 8-oxo-dGTPase activities and increases thermolability." evidence="8">
    <location>
        <begin position="151"/>
        <end position="156"/>
    </location>
</feature>
<feature type="mutagenesis site" description="Reduces 2-oxo-dATPase and 8-oxo-dGTPase activities and increases thermolability." evidence="8">
    <original>R</original>
    <variation>A</variation>
    <location>
        <position position="151"/>
    </location>
</feature>
<feature type="mutagenesis site" description="Greatly reduces 2-oxo-dATPase and 8-oxo-dGTPase activities and increases thermolability." evidence="8">
    <location>
        <begin position="152"/>
        <end position="156"/>
    </location>
</feature>
<feature type="mutagenesis site" description="Reduces 2-oxo-dATPase and 8-oxo-dGTPase activities and increases thermolability." evidence="8">
    <original>E</original>
    <variation>A</variation>
    <location>
        <position position="152"/>
    </location>
</feature>
<feature type="mutagenesis site" description="Reduces 2-oxo-dATPase and 8-oxo-dGTPase activities and increases thermolability." evidence="8">
    <location>
        <begin position="153"/>
        <end position="156"/>
    </location>
</feature>
<feature type="mutagenesis site" description="Reduces 2-oxo-dATPase and 8-oxo-dGTPase activities and increases thermolability." evidence="8">
    <original>V</original>
    <variation>A</variation>
    <location>
        <position position="153"/>
    </location>
</feature>
<feature type="mutagenesis site" description="Slightly enhances 2-oxo-dATPase and 8-oxo-dGTPase activities and increases thermolability." evidence="8">
    <location>
        <begin position="154"/>
        <end position="156"/>
    </location>
</feature>
<feature type="mutagenesis site" description="Enhances 2-oxo-dATPase and 8-oxo-dGTPase activities and increases thermolability." evidence="8">
    <original>D</original>
    <variation>A</variation>
    <location>
        <position position="154"/>
    </location>
</feature>
<feature type="mutagenesis site" description="Reduces 2-oxo-dATPase and 8-oxo-dGTPase activities and increases thermolability." evidence="8">
    <original>T</original>
    <variation>A</variation>
    <location>
        <position position="155"/>
    </location>
</feature>
<feature type="mutagenesis site" description="Slightly reduces 2-oxo-dATPase and 8-oxo-dGTPase activities and increases thermolability." evidence="8">
    <original>V</original>
    <variation>A</variation>
    <location>
        <position position="156"/>
    </location>
</feature>
<feature type="strand" evidence="62">
    <location>
        <begin position="4"/>
        <end position="13"/>
    </location>
</feature>
<feature type="strand" evidence="62">
    <location>
        <begin position="15"/>
        <end position="23"/>
    </location>
</feature>
<feature type="turn" evidence="62">
    <location>
        <begin position="27"/>
        <end position="30"/>
    </location>
</feature>
<feature type="strand" evidence="63">
    <location>
        <begin position="31"/>
        <end position="33"/>
    </location>
</feature>
<feature type="strand" evidence="64">
    <location>
        <begin position="35"/>
        <end position="38"/>
    </location>
</feature>
<feature type="helix" evidence="62">
    <location>
        <begin position="45"/>
        <end position="57"/>
    </location>
</feature>
<feature type="strand" evidence="63">
    <location>
        <begin position="60"/>
        <end position="62"/>
    </location>
</feature>
<feature type="strand" evidence="62">
    <location>
        <begin position="64"/>
        <end position="74"/>
    </location>
</feature>
<feature type="strand" evidence="62">
    <location>
        <begin position="79"/>
        <end position="90"/>
    </location>
</feature>
<feature type="strand" evidence="63">
    <location>
        <begin position="91"/>
        <end position="93"/>
    </location>
</feature>
<feature type="strand" evidence="62">
    <location>
        <begin position="99"/>
        <end position="107"/>
    </location>
</feature>
<feature type="helix" evidence="64">
    <location>
        <begin position="108"/>
        <end position="110"/>
    </location>
</feature>
<feature type="helix" evidence="62">
    <location>
        <begin position="113"/>
        <end position="115"/>
    </location>
</feature>
<feature type="helix" evidence="62">
    <location>
        <begin position="120"/>
        <end position="128"/>
    </location>
</feature>
<feature type="strand" evidence="62">
    <location>
        <begin position="132"/>
        <end position="140"/>
    </location>
</feature>
<feature type="turn" evidence="62">
    <location>
        <begin position="141"/>
        <end position="143"/>
    </location>
</feature>
<feature type="strand" evidence="62">
    <location>
        <begin position="144"/>
        <end position="154"/>
    </location>
</feature>
<organism>
    <name type="scientific">Homo sapiens</name>
    <name type="common">Human</name>
    <dbReference type="NCBI Taxonomy" id="9606"/>
    <lineage>
        <taxon>Eukaryota</taxon>
        <taxon>Metazoa</taxon>
        <taxon>Chordata</taxon>
        <taxon>Craniata</taxon>
        <taxon>Vertebrata</taxon>
        <taxon>Euteleostomi</taxon>
        <taxon>Mammalia</taxon>
        <taxon>Eutheria</taxon>
        <taxon>Euarchontoglires</taxon>
        <taxon>Primates</taxon>
        <taxon>Haplorrhini</taxon>
        <taxon>Catarrhini</taxon>
        <taxon>Hominidae</taxon>
        <taxon>Homo</taxon>
    </lineage>
</organism>
<sequence length="156" mass="17952">MGASRLYTLVLVLQPQRVLLGMKKRGFGAGRWNGFGGKVQEGETIEDGARRELQEESGLTVDALHKVGQIVFEFVGEPELMDVHVFCTDSIQGTPVESDEMRPCWFQLDQIPFKDMWPDDSYWFPLLLQKKKFHGYFKFQGQDTILDYTLREVDTV</sequence>
<protein>
    <recommendedName>
        <fullName evidence="31">Oxidized purine nucleoside triphosphate hydrolase</fullName>
        <ecNumber evidence="4 7 8 9 13 17 18">3.6.1.56</ecNumber>
    </recommendedName>
    <alternativeName>
        <fullName>2-hydroxy-dATP diphosphatase</fullName>
    </alternativeName>
    <alternativeName>
        <fullName>7,8-dihydro-8-oxoguanine triphosphatase</fullName>
    </alternativeName>
    <alternativeName>
        <fullName>8-oxo-dGTPase</fullName>
    </alternativeName>
    <alternativeName>
        <fullName evidence="36">Methylated purine nucleoside triphosphate hydrolase</fullName>
        <ecNumber evidence="23 24">3.6.1.-</ecNumber>
    </alternativeName>
    <alternativeName>
        <fullName>Nucleoside diphosphate-linked moiety X motif 1</fullName>
        <shortName>Nudix motif 1</shortName>
    </alternativeName>
</protein>